<accession>P0A7U7</accession>
<accession>P02378</accession>
<proteinExistence type="evidence at protein level"/>
<dbReference type="EMBL" id="M10428">
    <property type="protein sequence ID" value="AAA24604.1"/>
    <property type="molecule type" value="Genomic_DNA"/>
</dbReference>
<dbReference type="EMBL" id="X04382">
    <property type="protein sequence ID" value="CAA27968.1"/>
    <property type="molecule type" value="Genomic_DNA"/>
</dbReference>
<dbReference type="EMBL" id="U00096">
    <property type="protein sequence ID" value="AAC73134.1"/>
    <property type="molecule type" value="Genomic_DNA"/>
</dbReference>
<dbReference type="EMBL" id="AP009048">
    <property type="protein sequence ID" value="BAB96593.1"/>
    <property type="molecule type" value="Genomic_DNA"/>
</dbReference>
<dbReference type="PIR" id="A30425">
    <property type="entry name" value="R3EC20"/>
</dbReference>
<dbReference type="RefSeq" id="NP_414564.1">
    <property type="nucleotide sequence ID" value="NC_000913.3"/>
</dbReference>
<dbReference type="RefSeq" id="WP_001274021.1">
    <property type="nucleotide sequence ID" value="NZ_STEB01000010.1"/>
</dbReference>
<dbReference type="PDB" id="2YKR">
    <property type="method" value="EM"/>
    <property type="resolution" value="9.80 A"/>
    <property type="chains" value="T=3-87"/>
</dbReference>
<dbReference type="PDB" id="3J9Y">
    <property type="method" value="EM"/>
    <property type="resolution" value="3.90 A"/>
    <property type="chains" value="t=1-87"/>
</dbReference>
<dbReference type="PDB" id="3J9Z">
    <property type="method" value="EM"/>
    <property type="resolution" value="3.60 A"/>
    <property type="chains" value="ST=2-87"/>
</dbReference>
<dbReference type="PDB" id="3JA1">
    <property type="method" value="EM"/>
    <property type="resolution" value="3.60 A"/>
    <property type="chains" value="ST=2-87"/>
</dbReference>
<dbReference type="PDB" id="3JBU">
    <property type="method" value="EM"/>
    <property type="resolution" value="3.64 A"/>
    <property type="chains" value="T=1-87"/>
</dbReference>
<dbReference type="PDB" id="3JBV">
    <property type="method" value="EM"/>
    <property type="resolution" value="3.32 A"/>
    <property type="chains" value="T=1-87"/>
</dbReference>
<dbReference type="PDB" id="3JCD">
    <property type="method" value="EM"/>
    <property type="resolution" value="3.70 A"/>
    <property type="chains" value="t=1-87"/>
</dbReference>
<dbReference type="PDB" id="3JCE">
    <property type="method" value="EM"/>
    <property type="resolution" value="3.20 A"/>
    <property type="chains" value="t=1-87"/>
</dbReference>
<dbReference type="PDB" id="3JCJ">
    <property type="method" value="EM"/>
    <property type="resolution" value="3.70 A"/>
    <property type="chains" value="3=1-87"/>
</dbReference>
<dbReference type="PDB" id="3JCN">
    <property type="method" value="EM"/>
    <property type="resolution" value="4.60 A"/>
    <property type="chains" value="x=1-87"/>
</dbReference>
<dbReference type="PDB" id="4A2I">
    <property type="method" value="EM"/>
    <property type="resolution" value="16.50 A"/>
    <property type="chains" value="T=3-87"/>
</dbReference>
<dbReference type="PDB" id="4ADV">
    <property type="method" value="EM"/>
    <property type="resolution" value="13.50 A"/>
    <property type="chains" value="T=2-87"/>
</dbReference>
<dbReference type="PDB" id="4U1U">
    <property type="method" value="X-ray"/>
    <property type="resolution" value="2.95 A"/>
    <property type="chains" value="AT/CT=3-87"/>
</dbReference>
<dbReference type="PDB" id="4U1V">
    <property type="method" value="X-ray"/>
    <property type="resolution" value="3.00 A"/>
    <property type="chains" value="AT/CT=3-87"/>
</dbReference>
<dbReference type="PDB" id="4U20">
    <property type="method" value="X-ray"/>
    <property type="resolution" value="2.90 A"/>
    <property type="chains" value="AT/CT=3-87"/>
</dbReference>
<dbReference type="PDB" id="4U24">
    <property type="method" value="X-ray"/>
    <property type="resolution" value="2.90 A"/>
    <property type="chains" value="AT/CT=3-87"/>
</dbReference>
<dbReference type="PDB" id="4U25">
    <property type="method" value="X-ray"/>
    <property type="resolution" value="2.90 A"/>
    <property type="chains" value="AT/CT=3-87"/>
</dbReference>
<dbReference type="PDB" id="4U26">
    <property type="method" value="X-ray"/>
    <property type="resolution" value="2.80 A"/>
    <property type="chains" value="AT/CT=3-87"/>
</dbReference>
<dbReference type="PDB" id="4U27">
    <property type="method" value="X-ray"/>
    <property type="resolution" value="2.80 A"/>
    <property type="chains" value="AT/CT=3-87"/>
</dbReference>
<dbReference type="PDB" id="4V47">
    <property type="method" value="EM"/>
    <property type="resolution" value="12.30 A"/>
    <property type="chains" value="BT=2-87"/>
</dbReference>
<dbReference type="PDB" id="4V48">
    <property type="method" value="EM"/>
    <property type="resolution" value="11.50 A"/>
    <property type="chains" value="BT=2-87"/>
</dbReference>
<dbReference type="PDB" id="4V4H">
    <property type="method" value="X-ray"/>
    <property type="resolution" value="3.46 A"/>
    <property type="chains" value="AT/CT=1-87"/>
</dbReference>
<dbReference type="PDB" id="4V4Q">
    <property type="method" value="X-ray"/>
    <property type="resolution" value="3.46 A"/>
    <property type="chains" value="AT/CT=2-87"/>
</dbReference>
<dbReference type="PDB" id="4V4V">
    <property type="method" value="EM"/>
    <property type="resolution" value="15.00 A"/>
    <property type="chains" value="AT=5-87"/>
</dbReference>
<dbReference type="PDB" id="4V4W">
    <property type="method" value="EM"/>
    <property type="resolution" value="15.00 A"/>
    <property type="chains" value="AT=5-87"/>
</dbReference>
<dbReference type="PDB" id="4V50">
    <property type="method" value="X-ray"/>
    <property type="resolution" value="3.22 A"/>
    <property type="chains" value="AT/CT=2-87"/>
</dbReference>
<dbReference type="PDB" id="4V52">
    <property type="method" value="X-ray"/>
    <property type="resolution" value="3.21 A"/>
    <property type="chains" value="AT/CT=2-87"/>
</dbReference>
<dbReference type="PDB" id="4V53">
    <property type="method" value="X-ray"/>
    <property type="resolution" value="3.54 A"/>
    <property type="chains" value="AT/CT=2-87"/>
</dbReference>
<dbReference type="PDB" id="4V54">
    <property type="method" value="X-ray"/>
    <property type="resolution" value="3.30 A"/>
    <property type="chains" value="AT/CT=2-87"/>
</dbReference>
<dbReference type="PDB" id="4V55">
    <property type="method" value="X-ray"/>
    <property type="resolution" value="4.00 A"/>
    <property type="chains" value="AT/CT=2-87"/>
</dbReference>
<dbReference type="PDB" id="4V56">
    <property type="method" value="X-ray"/>
    <property type="resolution" value="3.93 A"/>
    <property type="chains" value="AT/CT=2-87"/>
</dbReference>
<dbReference type="PDB" id="4V57">
    <property type="method" value="X-ray"/>
    <property type="resolution" value="3.50 A"/>
    <property type="chains" value="AT/CT=2-87"/>
</dbReference>
<dbReference type="PDB" id="4V5B">
    <property type="method" value="X-ray"/>
    <property type="resolution" value="3.74 A"/>
    <property type="chains" value="BT/DT=2-87"/>
</dbReference>
<dbReference type="PDB" id="4V5H">
    <property type="method" value="EM"/>
    <property type="resolution" value="5.80 A"/>
    <property type="chains" value="AT=3-87"/>
</dbReference>
<dbReference type="PDB" id="4V5Y">
    <property type="method" value="X-ray"/>
    <property type="resolution" value="4.45 A"/>
    <property type="chains" value="AT/CT=2-87"/>
</dbReference>
<dbReference type="PDB" id="4V64">
    <property type="method" value="X-ray"/>
    <property type="resolution" value="3.50 A"/>
    <property type="chains" value="AT/CT=2-87"/>
</dbReference>
<dbReference type="PDB" id="4V65">
    <property type="method" value="EM"/>
    <property type="resolution" value="9.00 A"/>
    <property type="chains" value="AN=1-87"/>
</dbReference>
<dbReference type="PDB" id="4V66">
    <property type="method" value="EM"/>
    <property type="resolution" value="9.00 A"/>
    <property type="chains" value="AN=1-87"/>
</dbReference>
<dbReference type="PDB" id="4V69">
    <property type="method" value="EM"/>
    <property type="resolution" value="6.70 A"/>
    <property type="chains" value="AT=3-87"/>
</dbReference>
<dbReference type="PDB" id="4V6C">
    <property type="method" value="X-ray"/>
    <property type="resolution" value="3.19 A"/>
    <property type="chains" value="AT/CT=1-87"/>
</dbReference>
<dbReference type="PDB" id="4V6D">
    <property type="method" value="X-ray"/>
    <property type="resolution" value="3.81 A"/>
    <property type="chains" value="AT/CT=1-87"/>
</dbReference>
<dbReference type="PDB" id="4V6E">
    <property type="method" value="X-ray"/>
    <property type="resolution" value="3.71 A"/>
    <property type="chains" value="AT/CT=1-87"/>
</dbReference>
<dbReference type="PDB" id="4V6K">
    <property type="method" value="EM"/>
    <property type="resolution" value="8.25 A"/>
    <property type="chains" value="BX=1-87"/>
</dbReference>
<dbReference type="PDB" id="4V6L">
    <property type="method" value="EM"/>
    <property type="resolution" value="13.20 A"/>
    <property type="chains" value="AX=1-87"/>
</dbReference>
<dbReference type="PDB" id="4V6M">
    <property type="method" value="EM"/>
    <property type="resolution" value="7.10 A"/>
    <property type="chains" value="AT=2-87"/>
</dbReference>
<dbReference type="PDB" id="4V6N">
    <property type="method" value="EM"/>
    <property type="resolution" value="12.10 A"/>
    <property type="chains" value="BW=2-87"/>
</dbReference>
<dbReference type="PDB" id="4V6O">
    <property type="method" value="EM"/>
    <property type="resolution" value="14.70 A"/>
    <property type="chains" value="AW=2-87"/>
</dbReference>
<dbReference type="PDB" id="4V6P">
    <property type="method" value="EM"/>
    <property type="resolution" value="13.50 A"/>
    <property type="chains" value="AW=2-87"/>
</dbReference>
<dbReference type="PDB" id="4V6Q">
    <property type="method" value="EM"/>
    <property type="resolution" value="11.50 A"/>
    <property type="chains" value="AW=2-87"/>
</dbReference>
<dbReference type="PDB" id="4V6R">
    <property type="method" value="EM"/>
    <property type="resolution" value="11.50 A"/>
    <property type="chains" value="AW=2-87"/>
</dbReference>
<dbReference type="PDB" id="4V6S">
    <property type="method" value="EM"/>
    <property type="resolution" value="13.10 A"/>
    <property type="chains" value="BV=2-87"/>
</dbReference>
<dbReference type="PDB" id="4V6T">
    <property type="method" value="EM"/>
    <property type="resolution" value="8.30 A"/>
    <property type="chains" value="AT=3-87"/>
</dbReference>
<dbReference type="PDB" id="4V6V">
    <property type="method" value="EM"/>
    <property type="resolution" value="9.80 A"/>
    <property type="chains" value="AT=2-87"/>
</dbReference>
<dbReference type="PDB" id="4V6Y">
    <property type="method" value="EM"/>
    <property type="resolution" value="12.00 A"/>
    <property type="chains" value="AT=3-87"/>
</dbReference>
<dbReference type="PDB" id="4V6Z">
    <property type="method" value="EM"/>
    <property type="resolution" value="12.00 A"/>
    <property type="chains" value="AT=3-87"/>
</dbReference>
<dbReference type="PDB" id="4V70">
    <property type="method" value="EM"/>
    <property type="resolution" value="17.00 A"/>
    <property type="chains" value="AT=3-87"/>
</dbReference>
<dbReference type="PDB" id="4V71">
    <property type="method" value="EM"/>
    <property type="resolution" value="20.00 A"/>
    <property type="chains" value="AT=3-87"/>
</dbReference>
<dbReference type="PDB" id="4V72">
    <property type="method" value="EM"/>
    <property type="resolution" value="13.00 A"/>
    <property type="chains" value="AT=3-87"/>
</dbReference>
<dbReference type="PDB" id="4V73">
    <property type="method" value="EM"/>
    <property type="resolution" value="15.00 A"/>
    <property type="chains" value="AT=3-87"/>
</dbReference>
<dbReference type="PDB" id="4V74">
    <property type="method" value="EM"/>
    <property type="resolution" value="17.00 A"/>
    <property type="chains" value="AT=3-87"/>
</dbReference>
<dbReference type="PDB" id="4V75">
    <property type="method" value="EM"/>
    <property type="resolution" value="12.00 A"/>
    <property type="chains" value="AT=3-87"/>
</dbReference>
<dbReference type="PDB" id="4V76">
    <property type="method" value="EM"/>
    <property type="resolution" value="17.00 A"/>
    <property type="chains" value="AT=3-87"/>
</dbReference>
<dbReference type="PDB" id="4V77">
    <property type="method" value="EM"/>
    <property type="resolution" value="17.00 A"/>
    <property type="chains" value="AT=3-87"/>
</dbReference>
<dbReference type="PDB" id="4V78">
    <property type="method" value="EM"/>
    <property type="resolution" value="20.00 A"/>
    <property type="chains" value="AT=3-87"/>
</dbReference>
<dbReference type="PDB" id="4V79">
    <property type="method" value="EM"/>
    <property type="resolution" value="15.00 A"/>
    <property type="chains" value="AT=3-87"/>
</dbReference>
<dbReference type="PDB" id="4V7A">
    <property type="method" value="EM"/>
    <property type="resolution" value="9.00 A"/>
    <property type="chains" value="AT=3-87"/>
</dbReference>
<dbReference type="PDB" id="4V7B">
    <property type="method" value="EM"/>
    <property type="resolution" value="6.80 A"/>
    <property type="chains" value="AT=1-87"/>
</dbReference>
<dbReference type="PDB" id="4V7C">
    <property type="method" value="EM"/>
    <property type="resolution" value="7.60 A"/>
    <property type="chains" value="AT=2-87"/>
</dbReference>
<dbReference type="PDB" id="4V7D">
    <property type="method" value="EM"/>
    <property type="resolution" value="7.60 A"/>
    <property type="chains" value="BT=2-87"/>
</dbReference>
<dbReference type="PDB" id="4V7I">
    <property type="method" value="EM"/>
    <property type="resolution" value="9.60 A"/>
    <property type="chains" value="BT=1-87"/>
</dbReference>
<dbReference type="PDB" id="4V7S">
    <property type="method" value="X-ray"/>
    <property type="resolution" value="3.25 A"/>
    <property type="chains" value="AT/CT=3-87"/>
</dbReference>
<dbReference type="PDB" id="4V7T">
    <property type="method" value="X-ray"/>
    <property type="resolution" value="3.19 A"/>
    <property type="chains" value="AT/CT=3-87"/>
</dbReference>
<dbReference type="PDB" id="4V7U">
    <property type="method" value="X-ray"/>
    <property type="resolution" value="3.10 A"/>
    <property type="chains" value="AT/CT=3-87"/>
</dbReference>
<dbReference type="PDB" id="4V7V">
    <property type="method" value="X-ray"/>
    <property type="resolution" value="3.29 A"/>
    <property type="chains" value="AT/CT=3-87"/>
</dbReference>
<dbReference type="PDB" id="4V85">
    <property type="method" value="X-ray"/>
    <property type="resolution" value="3.20 A"/>
    <property type="chains" value="AT=1-87"/>
</dbReference>
<dbReference type="PDB" id="4V89">
    <property type="method" value="X-ray"/>
    <property type="resolution" value="3.70 A"/>
    <property type="chains" value="AT=1-87"/>
</dbReference>
<dbReference type="PDB" id="4V9C">
    <property type="method" value="X-ray"/>
    <property type="resolution" value="3.30 A"/>
    <property type="chains" value="AT/CT=1-87"/>
</dbReference>
<dbReference type="PDB" id="4V9D">
    <property type="method" value="X-ray"/>
    <property type="resolution" value="3.00 A"/>
    <property type="chains" value="AT/BT=3-87"/>
</dbReference>
<dbReference type="PDB" id="4V9O">
    <property type="method" value="X-ray"/>
    <property type="resolution" value="2.90 A"/>
    <property type="chains" value="BT/DT/FT/HT=1-87"/>
</dbReference>
<dbReference type="PDB" id="4V9P">
    <property type="method" value="X-ray"/>
    <property type="resolution" value="2.90 A"/>
    <property type="chains" value="BT/DT/FT/HT=1-87"/>
</dbReference>
<dbReference type="PDB" id="4WF1">
    <property type="method" value="X-ray"/>
    <property type="resolution" value="3.09 A"/>
    <property type="chains" value="AT/CT=3-87"/>
</dbReference>
<dbReference type="PDB" id="4WOI">
    <property type="method" value="X-ray"/>
    <property type="resolution" value="3.00 A"/>
    <property type="chains" value="AT/DT=1-87"/>
</dbReference>
<dbReference type="PDB" id="4WWW">
    <property type="method" value="X-ray"/>
    <property type="resolution" value="3.10 A"/>
    <property type="chains" value="QT/XT=3-87"/>
</dbReference>
<dbReference type="PDB" id="4YBB">
    <property type="method" value="X-ray"/>
    <property type="resolution" value="2.10 A"/>
    <property type="chains" value="AT/BT=2-87"/>
</dbReference>
<dbReference type="PDB" id="5AFI">
    <property type="method" value="EM"/>
    <property type="resolution" value="2.90 A"/>
    <property type="chains" value="t=1-87"/>
</dbReference>
<dbReference type="PDB" id="5H5U">
    <property type="method" value="EM"/>
    <property type="resolution" value="3.00 A"/>
    <property type="chains" value="1=2-87"/>
</dbReference>
<dbReference type="PDB" id="5IQR">
    <property type="method" value="EM"/>
    <property type="resolution" value="3.00 A"/>
    <property type="chains" value="y=1-87"/>
</dbReference>
<dbReference type="PDB" id="5IT8">
    <property type="method" value="X-ray"/>
    <property type="resolution" value="3.12 A"/>
    <property type="chains" value="AT/BT=2-87"/>
</dbReference>
<dbReference type="PDB" id="5J5B">
    <property type="method" value="X-ray"/>
    <property type="resolution" value="2.80 A"/>
    <property type="chains" value="AT/BT=2-87"/>
</dbReference>
<dbReference type="PDB" id="5J7L">
    <property type="method" value="X-ray"/>
    <property type="resolution" value="3.00 A"/>
    <property type="chains" value="AT/BT=2-87"/>
</dbReference>
<dbReference type="PDB" id="5J88">
    <property type="method" value="X-ray"/>
    <property type="resolution" value="3.32 A"/>
    <property type="chains" value="AT/BT=2-87"/>
</dbReference>
<dbReference type="PDB" id="5J8A">
    <property type="method" value="X-ray"/>
    <property type="resolution" value="3.10 A"/>
    <property type="chains" value="AT/BT=2-87"/>
</dbReference>
<dbReference type="PDB" id="5J91">
    <property type="method" value="X-ray"/>
    <property type="resolution" value="2.96 A"/>
    <property type="chains" value="AT/BT=2-87"/>
</dbReference>
<dbReference type="PDB" id="5JC9">
    <property type="method" value="X-ray"/>
    <property type="resolution" value="3.03 A"/>
    <property type="chains" value="AT/BT=2-87"/>
</dbReference>
<dbReference type="PDB" id="5JTE">
    <property type="method" value="EM"/>
    <property type="resolution" value="3.60 A"/>
    <property type="chains" value="AT=1-87"/>
</dbReference>
<dbReference type="PDB" id="5JU8">
    <property type="method" value="EM"/>
    <property type="resolution" value="3.60 A"/>
    <property type="chains" value="AT=1-87"/>
</dbReference>
<dbReference type="PDB" id="5KCR">
    <property type="method" value="EM"/>
    <property type="resolution" value="3.60 A"/>
    <property type="chains" value="1t=1-87"/>
</dbReference>
<dbReference type="PDB" id="5KCS">
    <property type="method" value="EM"/>
    <property type="resolution" value="3.90 A"/>
    <property type="chains" value="1t=1-87"/>
</dbReference>
<dbReference type="PDB" id="5KPS">
    <property type="method" value="EM"/>
    <property type="resolution" value="3.90 A"/>
    <property type="chains" value="25=1-87"/>
</dbReference>
<dbReference type="PDB" id="5KPV">
    <property type="method" value="EM"/>
    <property type="resolution" value="4.10 A"/>
    <property type="chains" value="24=1-87"/>
</dbReference>
<dbReference type="PDB" id="5KPW">
    <property type="method" value="EM"/>
    <property type="resolution" value="3.90 A"/>
    <property type="chains" value="24=1-87"/>
</dbReference>
<dbReference type="PDB" id="5KPX">
    <property type="method" value="EM"/>
    <property type="resolution" value="3.90 A"/>
    <property type="chains" value="24=1-87"/>
</dbReference>
<dbReference type="PDB" id="5L3P">
    <property type="method" value="EM"/>
    <property type="resolution" value="3.70 A"/>
    <property type="chains" value="t=1-87"/>
</dbReference>
<dbReference type="PDB" id="5LZA">
    <property type="method" value="EM"/>
    <property type="resolution" value="3.60 A"/>
    <property type="chains" value="t=3-87"/>
</dbReference>
<dbReference type="PDB" id="5LZB">
    <property type="method" value="EM"/>
    <property type="resolution" value="5.30 A"/>
    <property type="chains" value="t=3-87"/>
</dbReference>
<dbReference type="PDB" id="5LZC">
    <property type="method" value="EM"/>
    <property type="resolution" value="4.80 A"/>
    <property type="chains" value="t=3-87"/>
</dbReference>
<dbReference type="PDB" id="5LZD">
    <property type="method" value="EM"/>
    <property type="resolution" value="3.40 A"/>
    <property type="chains" value="t=3-87"/>
</dbReference>
<dbReference type="PDB" id="5LZE">
    <property type="method" value="EM"/>
    <property type="resolution" value="3.50 A"/>
    <property type="chains" value="t=3-87"/>
</dbReference>
<dbReference type="PDB" id="5LZF">
    <property type="method" value="EM"/>
    <property type="resolution" value="4.60 A"/>
    <property type="chains" value="t=3-87"/>
</dbReference>
<dbReference type="PDB" id="5MDV">
    <property type="method" value="EM"/>
    <property type="resolution" value="2.97 A"/>
    <property type="chains" value="y=1-87"/>
</dbReference>
<dbReference type="PDB" id="5MDW">
    <property type="method" value="EM"/>
    <property type="resolution" value="3.06 A"/>
    <property type="chains" value="y=1-87"/>
</dbReference>
<dbReference type="PDB" id="5MDY">
    <property type="method" value="EM"/>
    <property type="resolution" value="3.35 A"/>
    <property type="chains" value="y=1-87"/>
</dbReference>
<dbReference type="PDB" id="5MDZ">
    <property type="method" value="EM"/>
    <property type="resolution" value="3.10 A"/>
    <property type="chains" value="y=1-87"/>
</dbReference>
<dbReference type="PDB" id="5ME0">
    <property type="method" value="EM"/>
    <property type="resolution" value="13.50 A"/>
    <property type="chains" value="T=1-87"/>
</dbReference>
<dbReference type="PDB" id="5ME1">
    <property type="method" value="EM"/>
    <property type="resolution" value="13.50 A"/>
    <property type="chains" value="T=1-87"/>
</dbReference>
<dbReference type="PDB" id="5MGP">
    <property type="method" value="EM"/>
    <property type="resolution" value="3.10 A"/>
    <property type="chains" value="t=3-87"/>
</dbReference>
<dbReference type="PDB" id="5MY1">
    <property type="method" value="EM"/>
    <property type="resolution" value="7.60 A"/>
    <property type="chains" value="T=2-87"/>
</dbReference>
<dbReference type="PDB" id="5NO2">
    <property type="method" value="EM"/>
    <property type="resolution" value="5.16 A"/>
    <property type="chains" value="T=2-87"/>
</dbReference>
<dbReference type="PDB" id="5NO3">
    <property type="method" value="EM"/>
    <property type="resolution" value="5.16 A"/>
    <property type="chains" value="T=2-87"/>
</dbReference>
<dbReference type="PDB" id="5NO4">
    <property type="method" value="EM"/>
    <property type="resolution" value="5.16 A"/>
    <property type="chains" value="T=2-87"/>
</dbReference>
<dbReference type="PDB" id="5NP6">
    <property type="method" value="EM"/>
    <property type="resolution" value="3.60 A"/>
    <property type="chains" value="W=3-87"/>
</dbReference>
<dbReference type="PDB" id="5NWY">
    <property type="method" value="EM"/>
    <property type="resolution" value="2.93 A"/>
    <property type="chains" value="J=1-87"/>
</dbReference>
<dbReference type="PDB" id="5O2R">
    <property type="method" value="EM"/>
    <property type="resolution" value="3.40 A"/>
    <property type="chains" value="t=3-87"/>
</dbReference>
<dbReference type="PDB" id="5U4I">
    <property type="method" value="EM"/>
    <property type="resolution" value="3.50 A"/>
    <property type="chains" value="t=2-87"/>
</dbReference>
<dbReference type="PDB" id="5U9F">
    <property type="method" value="EM"/>
    <property type="resolution" value="3.20 A"/>
    <property type="chains" value="T=1-87"/>
</dbReference>
<dbReference type="PDB" id="5U9G">
    <property type="method" value="EM"/>
    <property type="resolution" value="3.20 A"/>
    <property type="chains" value="T=1-87"/>
</dbReference>
<dbReference type="PDB" id="5UYK">
    <property type="method" value="EM"/>
    <property type="resolution" value="3.90 A"/>
    <property type="chains" value="T=3-87"/>
</dbReference>
<dbReference type="PDB" id="5UYL">
    <property type="method" value="EM"/>
    <property type="resolution" value="3.60 A"/>
    <property type="chains" value="T=3-87"/>
</dbReference>
<dbReference type="PDB" id="5UYM">
    <property type="method" value="EM"/>
    <property type="resolution" value="3.20 A"/>
    <property type="chains" value="T=3-87"/>
</dbReference>
<dbReference type="PDB" id="5UYN">
    <property type="method" value="EM"/>
    <property type="resolution" value="4.00 A"/>
    <property type="chains" value="T=3-87"/>
</dbReference>
<dbReference type="PDB" id="5UYP">
    <property type="method" value="EM"/>
    <property type="resolution" value="3.90 A"/>
    <property type="chains" value="T=3-87"/>
</dbReference>
<dbReference type="PDB" id="5UYQ">
    <property type="method" value="EM"/>
    <property type="resolution" value="3.80 A"/>
    <property type="chains" value="T=3-87"/>
</dbReference>
<dbReference type="PDB" id="5UZ4">
    <property type="method" value="EM"/>
    <property type="resolution" value="5.80 A"/>
    <property type="chains" value="T=1-87"/>
</dbReference>
<dbReference type="PDB" id="5WDT">
    <property type="method" value="EM"/>
    <property type="resolution" value="3.00 A"/>
    <property type="chains" value="t=3-87"/>
</dbReference>
<dbReference type="PDB" id="5WE4">
    <property type="method" value="EM"/>
    <property type="resolution" value="3.10 A"/>
    <property type="chains" value="t=3-87"/>
</dbReference>
<dbReference type="PDB" id="5WE6">
    <property type="method" value="EM"/>
    <property type="resolution" value="3.40 A"/>
    <property type="chains" value="t=3-87"/>
</dbReference>
<dbReference type="PDB" id="5WF0">
    <property type="method" value="EM"/>
    <property type="resolution" value="3.60 A"/>
    <property type="chains" value="t=3-87"/>
</dbReference>
<dbReference type="PDB" id="5WFK">
    <property type="method" value="EM"/>
    <property type="resolution" value="3.40 A"/>
    <property type="chains" value="t=3-87"/>
</dbReference>
<dbReference type="PDB" id="5WFS">
    <property type="method" value="EM"/>
    <property type="resolution" value="3.00 A"/>
    <property type="chains" value="t=3-87"/>
</dbReference>
<dbReference type="PDB" id="6AWB">
    <property type="method" value="EM"/>
    <property type="resolution" value="6.70 A"/>
    <property type="chains" value="W=3-87"/>
</dbReference>
<dbReference type="PDB" id="6AWC">
    <property type="method" value="EM"/>
    <property type="resolution" value="7.90 A"/>
    <property type="chains" value="W=3-87"/>
</dbReference>
<dbReference type="PDB" id="6AWD">
    <property type="method" value="EM"/>
    <property type="resolution" value="8.10 A"/>
    <property type="chains" value="W=3-87"/>
</dbReference>
<dbReference type="PDB" id="6BU8">
    <property type="method" value="EM"/>
    <property type="resolution" value="3.50 A"/>
    <property type="chains" value="T=3-87"/>
</dbReference>
<dbReference type="PDB" id="6BY1">
    <property type="method" value="X-ray"/>
    <property type="resolution" value="3.94 A"/>
    <property type="chains" value="AT/BT=3-87"/>
</dbReference>
<dbReference type="PDB" id="6C4I">
    <property type="method" value="EM"/>
    <property type="resolution" value="3.24 A"/>
    <property type="chains" value="t=1-87"/>
</dbReference>
<dbReference type="PDB" id="6DNC">
    <property type="method" value="EM"/>
    <property type="resolution" value="3.70 A"/>
    <property type="chains" value="GB=1-87"/>
</dbReference>
<dbReference type="PDB" id="6ENF">
    <property type="method" value="EM"/>
    <property type="resolution" value="3.20 A"/>
    <property type="chains" value="t=3-87"/>
</dbReference>
<dbReference type="PDB" id="6ENJ">
    <property type="method" value="EM"/>
    <property type="resolution" value="3.70 A"/>
    <property type="chains" value="t=3-87"/>
</dbReference>
<dbReference type="PDB" id="6ENU">
    <property type="method" value="EM"/>
    <property type="resolution" value="3.10 A"/>
    <property type="chains" value="t=3-87"/>
</dbReference>
<dbReference type="PDB" id="6GWT">
    <property type="method" value="EM"/>
    <property type="resolution" value="3.80 A"/>
    <property type="chains" value="t=3-87"/>
</dbReference>
<dbReference type="PDB" id="6GXM">
    <property type="method" value="EM"/>
    <property type="resolution" value="3.80 A"/>
    <property type="chains" value="t=3-87"/>
</dbReference>
<dbReference type="PDB" id="6GXN">
    <property type="method" value="EM"/>
    <property type="resolution" value="3.90 A"/>
    <property type="chains" value="t=3-87"/>
</dbReference>
<dbReference type="PDB" id="6GXO">
    <property type="method" value="EM"/>
    <property type="resolution" value="3.90 A"/>
    <property type="chains" value="t=3-87"/>
</dbReference>
<dbReference type="PDB" id="6GXP">
    <property type="method" value="EM"/>
    <property type="resolution" value="4.40 A"/>
    <property type="chains" value="t=3-87"/>
</dbReference>
<dbReference type="PDB" id="6H4N">
    <property type="method" value="EM"/>
    <property type="resolution" value="3.00 A"/>
    <property type="chains" value="t=3-87"/>
</dbReference>
<dbReference type="PDB" id="6H58">
    <property type="method" value="EM"/>
    <property type="resolution" value="7.90 A"/>
    <property type="chains" value="t/tt=3-87"/>
</dbReference>
<dbReference type="PDB" id="6HRM">
    <property type="method" value="EM"/>
    <property type="resolution" value="2.96 A"/>
    <property type="chains" value="y=2-87"/>
</dbReference>
<dbReference type="PDB" id="6I7V">
    <property type="method" value="X-ray"/>
    <property type="resolution" value="2.90 A"/>
    <property type="chains" value="AT/BT=3-87"/>
</dbReference>
<dbReference type="PDB" id="6NQB">
    <property type="method" value="EM"/>
    <property type="resolution" value="3.80 A"/>
    <property type="chains" value="T=3-87"/>
</dbReference>
<dbReference type="PDB" id="6O7K">
    <property type="method" value="EM"/>
    <property type="resolution" value="4.20 A"/>
    <property type="chains" value="3=3-87"/>
</dbReference>
<dbReference type="PDB" id="6O9J">
    <property type="method" value="EM"/>
    <property type="resolution" value="3.90 A"/>
    <property type="chains" value="t=3-87"/>
</dbReference>
<dbReference type="PDB" id="6O9K">
    <property type="method" value="EM"/>
    <property type="resolution" value="4.00 A"/>
    <property type="chains" value="t=3-87"/>
</dbReference>
<dbReference type="PDB" id="6OFX">
    <property type="method" value="EM"/>
    <property type="resolution" value="3.30 A"/>
    <property type="chains" value="Y=3-87"/>
</dbReference>
<dbReference type="PDB" id="6OG7">
    <property type="method" value="EM"/>
    <property type="resolution" value="3.30 A"/>
    <property type="chains" value="Y=3-87"/>
</dbReference>
<dbReference type="PDB" id="6OGF">
    <property type="method" value="EM"/>
    <property type="resolution" value="3.90 A"/>
    <property type="chains" value="Y=1-87"/>
</dbReference>
<dbReference type="PDB" id="6OGG">
    <property type="method" value="EM"/>
    <property type="resolution" value="4.20 A"/>
    <property type="chains" value="Y=1-87"/>
</dbReference>
<dbReference type="PDB" id="6OGI">
    <property type="method" value="EM"/>
    <property type="resolution" value="3.40 A"/>
    <property type="chains" value="Y=1-87"/>
</dbReference>
<dbReference type="PDB" id="6OM6">
    <property type="method" value="EM"/>
    <property type="resolution" value="3.10 A"/>
    <property type="chains" value="y=1-87"/>
</dbReference>
<dbReference type="PDB" id="6ORE">
    <property type="method" value="EM"/>
    <property type="resolution" value="2.90 A"/>
    <property type="chains" value="y=2-87"/>
</dbReference>
<dbReference type="PDB" id="6ORL">
    <property type="method" value="EM"/>
    <property type="resolution" value="3.50 A"/>
    <property type="chains" value="y=2-87"/>
</dbReference>
<dbReference type="PDB" id="6OSK">
    <property type="method" value="EM"/>
    <property type="resolution" value="3.60 A"/>
    <property type="chains" value="y=2-87"/>
</dbReference>
<dbReference type="PDB" id="6OSQ">
    <property type="method" value="EM"/>
    <property type="resolution" value="3.50 A"/>
    <property type="chains" value="y=2-87"/>
</dbReference>
<dbReference type="PDB" id="6OST">
    <property type="method" value="EM"/>
    <property type="resolution" value="4.20 A"/>
    <property type="chains" value="y=2-87"/>
</dbReference>
<dbReference type="PDB" id="6OT3">
    <property type="method" value="EM"/>
    <property type="resolution" value="3.90 A"/>
    <property type="chains" value="y=2-87"/>
</dbReference>
<dbReference type="PDB" id="6OUO">
    <property type="method" value="EM"/>
    <property type="resolution" value="3.70 A"/>
    <property type="chains" value="y=2-87"/>
</dbReference>
<dbReference type="PDB" id="6Q97">
    <property type="method" value="EM"/>
    <property type="resolution" value="3.90 A"/>
    <property type="chains" value="y=2-86"/>
</dbReference>
<dbReference type="PDB" id="6Q98">
    <property type="method" value="EM"/>
    <property type="resolution" value="4.30 A"/>
    <property type="chains" value="y=1-87"/>
</dbReference>
<dbReference type="PDB" id="6Q9A">
    <property type="method" value="EM"/>
    <property type="resolution" value="3.70 A"/>
    <property type="chains" value="y=2-86"/>
</dbReference>
<dbReference type="PDB" id="6SZS">
    <property type="method" value="EM"/>
    <property type="resolution" value="3.06 A"/>
    <property type="chains" value="t=1-87"/>
</dbReference>
<dbReference type="PDB" id="6TBV">
    <property type="method" value="EM"/>
    <property type="resolution" value="2.70 A"/>
    <property type="chains" value="S201=1-87"/>
</dbReference>
<dbReference type="PDB" id="6TC3">
    <property type="method" value="EM"/>
    <property type="resolution" value="2.70 A"/>
    <property type="chains" value="S201=1-87"/>
</dbReference>
<dbReference type="PDB" id="6VU3">
    <property type="method" value="EM"/>
    <property type="resolution" value="3.70 A"/>
    <property type="chains" value="E=2-87"/>
</dbReference>
<dbReference type="PDB" id="6VYQ">
    <property type="method" value="EM"/>
    <property type="resolution" value="3.70 A"/>
    <property type="chains" value="E=1-87"/>
</dbReference>
<dbReference type="PDB" id="6VYR">
    <property type="method" value="EM"/>
    <property type="resolution" value="3.80 A"/>
    <property type="chains" value="E=1-87"/>
</dbReference>
<dbReference type="PDB" id="6VYS">
    <property type="method" value="EM"/>
    <property type="resolution" value="3.70 A"/>
    <property type="chains" value="E=1-87"/>
</dbReference>
<dbReference type="PDB" id="6VYT">
    <property type="method" value="EM"/>
    <property type="resolution" value="14.00 A"/>
    <property type="chains" value="E=1-87"/>
</dbReference>
<dbReference type="PDB" id="6VYU">
    <property type="method" value="EM"/>
    <property type="resolution" value="7.00 A"/>
    <property type="chains" value="E=1-87"/>
</dbReference>
<dbReference type="PDB" id="6VYW">
    <property type="method" value="EM"/>
    <property type="resolution" value="7.00 A"/>
    <property type="chains" value="E=1-87"/>
</dbReference>
<dbReference type="PDB" id="6VYX">
    <property type="method" value="EM"/>
    <property type="resolution" value="9.90 A"/>
    <property type="chains" value="E=1-87"/>
</dbReference>
<dbReference type="PDB" id="6VYY">
    <property type="method" value="EM"/>
    <property type="resolution" value="9.90 A"/>
    <property type="chains" value="E=1-87"/>
</dbReference>
<dbReference type="PDB" id="6VYZ">
    <property type="method" value="EM"/>
    <property type="resolution" value="9.90 A"/>
    <property type="chains" value="E=1-87"/>
</dbReference>
<dbReference type="PDB" id="6VZ2">
    <property type="method" value="EM"/>
    <property type="resolution" value="10.00 A"/>
    <property type="chains" value="E=1-87"/>
</dbReference>
<dbReference type="PDB" id="6VZ3">
    <property type="method" value="EM"/>
    <property type="resolution" value="8.90 A"/>
    <property type="chains" value="E=2-87"/>
</dbReference>
<dbReference type="PDB" id="6VZ5">
    <property type="method" value="EM"/>
    <property type="resolution" value="8.90 A"/>
    <property type="chains" value="E=1-87"/>
</dbReference>
<dbReference type="PDB" id="6VZ7">
    <property type="method" value="EM"/>
    <property type="resolution" value="7.00 A"/>
    <property type="chains" value="E=2-87"/>
</dbReference>
<dbReference type="PDB" id="6VZJ">
    <property type="method" value="EM"/>
    <property type="resolution" value="4.10 A"/>
    <property type="chains" value="E=1-87"/>
</dbReference>
<dbReference type="PDB" id="6W6K">
    <property type="method" value="EM"/>
    <property type="resolution" value="3.60 A"/>
    <property type="chains" value="T=1-87"/>
</dbReference>
<dbReference type="PDB" id="6W77">
    <property type="method" value="EM"/>
    <property type="resolution" value="3.60 A"/>
    <property type="chains" value="T=1-87"/>
</dbReference>
<dbReference type="PDB" id="6W7M">
    <property type="method" value="EM"/>
    <property type="resolution" value="3.80 A"/>
    <property type="chains" value="T=1-87"/>
</dbReference>
<dbReference type="PDB" id="6W7N">
    <property type="method" value="EM"/>
    <property type="resolution" value="3.40 A"/>
    <property type="chains" value="T=1-87"/>
</dbReference>
<dbReference type="PDB" id="6W7W">
    <property type="method" value="EM"/>
    <property type="resolution" value="3.90 A"/>
    <property type="chains" value="S=1-87"/>
</dbReference>
<dbReference type="PDB" id="6WD0">
    <property type="method" value="EM"/>
    <property type="resolution" value="3.00 A"/>
    <property type="chains" value="Y=3-87"/>
</dbReference>
<dbReference type="PDB" id="6WD1">
    <property type="method" value="EM"/>
    <property type="resolution" value="3.30 A"/>
    <property type="chains" value="Y=3-87"/>
</dbReference>
<dbReference type="PDB" id="6WD2">
    <property type="method" value="EM"/>
    <property type="resolution" value="3.60 A"/>
    <property type="chains" value="Y=3-87"/>
</dbReference>
<dbReference type="PDB" id="6WD3">
    <property type="method" value="EM"/>
    <property type="resolution" value="3.60 A"/>
    <property type="chains" value="Y=3-87"/>
</dbReference>
<dbReference type="PDB" id="6WD4">
    <property type="method" value="EM"/>
    <property type="resolution" value="3.70 A"/>
    <property type="chains" value="Y=3-87"/>
</dbReference>
<dbReference type="PDB" id="6WD5">
    <property type="method" value="EM"/>
    <property type="resolution" value="3.60 A"/>
    <property type="chains" value="Y=3-87"/>
</dbReference>
<dbReference type="PDB" id="6WD6">
    <property type="method" value="EM"/>
    <property type="resolution" value="3.70 A"/>
    <property type="chains" value="Y=3-87"/>
</dbReference>
<dbReference type="PDB" id="6WD7">
    <property type="method" value="EM"/>
    <property type="resolution" value="3.90 A"/>
    <property type="chains" value="Y=3-87"/>
</dbReference>
<dbReference type="PDB" id="6WD8">
    <property type="method" value="EM"/>
    <property type="resolution" value="3.70 A"/>
    <property type="chains" value="Y=3-87"/>
</dbReference>
<dbReference type="PDB" id="6WD9">
    <property type="method" value="EM"/>
    <property type="resolution" value="3.70 A"/>
    <property type="chains" value="Y=3-87"/>
</dbReference>
<dbReference type="PDB" id="6WDA">
    <property type="method" value="EM"/>
    <property type="resolution" value="3.80 A"/>
    <property type="chains" value="Y=3-87"/>
</dbReference>
<dbReference type="PDB" id="6WDB">
    <property type="method" value="EM"/>
    <property type="resolution" value="4.00 A"/>
    <property type="chains" value="Y=3-87"/>
</dbReference>
<dbReference type="PDB" id="6WDC">
    <property type="method" value="EM"/>
    <property type="resolution" value="4.20 A"/>
    <property type="chains" value="Y=3-87"/>
</dbReference>
<dbReference type="PDB" id="6WDD">
    <property type="method" value="EM"/>
    <property type="resolution" value="3.20 A"/>
    <property type="chains" value="Y=3-87"/>
</dbReference>
<dbReference type="PDB" id="6WDE">
    <property type="method" value="EM"/>
    <property type="resolution" value="3.00 A"/>
    <property type="chains" value="Y=3-87"/>
</dbReference>
<dbReference type="PDB" id="6WDF">
    <property type="method" value="EM"/>
    <property type="resolution" value="3.30 A"/>
    <property type="chains" value="Y=3-87"/>
</dbReference>
<dbReference type="PDB" id="6WDG">
    <property type="method" value="EM"/>
    <property type="resolution" value="3.30 A"/>
    <property type="chains" value="Y=3-87"/>
</dbReference>
<dbReference type="PDB" id="6WDH">
    <property type="method" value="EM"/>
    <property type="resolution" value="4.30 A"/>
    <property type="chains" value="Y=3-87"/>
</dbReference>
<dbReference type="PDB" id="6WDI">
    <property type="method" value="EM"/>
    <property type="resolution" value="4.00 A"/>
    <property type="chains" value="Y=3-87"/>
</dbReference>
<dbReference type="PDB" id="6WDJ">
    <property type="method" value="EM"/>
    <property type="resolution" value="3.70 A"/>
    <property type="chains" value="Y=3-87"/>
</dbReference>
<dbReference type="PDB" id="6WDK">
    <property type="method" value="EM"/>
    <property type="resolution" value="3.60 A"/>
    <property type="chains" value="Y=3-87"/>
</dbReference>
<dbReference type="PDB" id="6WDL">
    <property type="method" value="EM"/>
    <property type="resolution" value="3.70 A"/>
    <property type="chains" value="Y=3-87"/>
</dbReference>
<dbReference type="PDB" id="6WDM">
    <property type="method" value="EM"/>
    <property type="resolution" value="3.60 A"/>
    <property type="chains" value="Y=3-87"/>
</dbReference>
<dbReference type="PDB" id="6WNV">
    <property type="method" value="EM"/>
    <property type="resolution" value="3.50 A"/>
    <property type="chains" value="Y=3-87"/>
</dbReference>
<dbReference type="PDB" id="6WNW">
    <property type="method" value="EM"/>
    <property type="resolution" value="3.20 A"/>
    <property type="chains" value="Y=3-87"/>
</dbReference>
<dbReference type="PDB" id="6X6T">
    <property type="method" value="EM"/>
    <property type="resolution" value="3.20 A"/>
    <property type="chains" value="E=1-87"/>
</dbReference>
<dbReference type="PDB" id="6X7F">
    <property type="method" value="EM"/>
    <property type="resolution" value="3.50 A"/>
    <property type="chains" value="E=1-87"/>
</dbReference>
<dbReference type="PDB" id="6X7K">
    <property type="method" value="EM"/>
    <property type="resolution" value="3.10 A"/>
    <property type="chains" value="E=1-87"/>
</dbReference>
<dbReference type="PDB" id="6X9Q">
    <property type="method" value="EM"/>
    <property type="resolution" value="4.80 A"/>
    <property type="chains" value="E=1-87"/>
</dbReference>
<dbReference type="PDB" id="6XDQ">
    <property type="method" value="EM"/>
    <property type="resolution" value="3.70 A"/>
    <property type="chains" value="E=1-87"/>
</dbReference>
<dbReference type="PDB" id="6XDR">
    <property type="method" value="EM"/>
    <property type="resolution" value="4.70 A"/>
    <property type="chains" value="E=1-87"/>
</dbReference>
<dbReference type="PDB" id="6XE0">
    <property type="method" value="EM"/>
    <property type="resolution" value="6.80 A"/>
    <property type="chains" value="T=3-87"/>
</dbReference>
<dbReference type="PDB" id="6XGF">
    <property type="method" value="EM"/>
    <property type="resolution" value="5.00 A"/>
    <property type="chains" value="E=1-87"/>
</dbReference>
<dbReference type="PDB" id="6XII">
    <property type="method" value="EM"/>
    <property type="resolution" value="7.00 A"/>
    <property type="chains" value="E=1-87"/>
</dbReference>
<dbReference type="PDB" id="6XIJ">
    <property type="method" value="EM"/>
    <property type="resolution" value="8.00 A"/>
    <property type="chains" value="E=1-87"/>
</dbReference>
<dbReference type="PDB" id="6XZA">
    <property type="method" value="EM"/>
    <property type="resolution" value="2.66 A"/>
    <property type="chains" value="T1=2-87"/>
</dbReference>
<dbReference type="PDB" id="6XZB">
    <property type="method" value="EM"/>
    <property type="resolution" value="2.54 A"/>
    <property type="chains" value="T1=2-87"/>
</dbReference>
<dbReference type="PDB" id="6Y69">
    <property type="method" value="EM"/>
    <property type="resolution" value="2.86 A"/>
    <property type="chains" value="t=3-87"/>
</dbReference>
<dbReference type="PDB" id="6ZTJ">
    <property type="method" value="EM"/>
    <property type="resolution" value="3.40 A"/>
    <property type="chains" value="AT=1-87"/>
</dbReference>
<dbReference type="PDB" id="6ZTL">
    <property type="method" value="EM"/>
    <property type="resolution" value="3.50 A"/>
    <property type="chains" value="AT=1-87"/>
</dbReference>
<dbReference type="PDB" id="6ZTM">
    <property type="method" value="EM"/>
    <property type="resolution" value="3.30 A"/>
    <property type="chains" value="AT=1-87"/>
</dbReference>
<dbReference type="PDB" id="6ZTN">
    <property type="method" value="EM"/>
    <property type="resolution" value="3.90 A"/>
    <property type="chains" value="AT=1-87"/>
</dbReference>
<dbReference type="PDB" id="6ZTO">
    <property type="method" value="EM"/>
    <property type="resolution" value="3.00 A"/>
    <property type="chains" value="AT=1-87"/>
</dbReference>
<dbReference type="PDB" id="6ZTP">
    <property type="method" value="EM"/>
    <property type="resolution" value="3.00 A"/>
    <property type="chains" value="AT=1-87"/>
</dbReference>
<dbReference type="PDB" id="6ZU1">
    <property type="method" value="EM"/>
    <property type="resolution" value="3.00 A"/>
    <property type="chains" value="AT=1-87"/>
</dbReference>
<dbReference type="PDB" id="7ABZ">
    <property type="method" value="EM"/>
    <property type="resolution" value="3.21 A"/>
    <property type="chains" value="y=3-87"/>
</dbReference>
<dbReference type="PDB" id="7AC7">
    <property type="method" value="EM"/>
    <property type="resolution" value="3.08 A"/>
    <property type="chains" value="y=2-86"/>
</dbReference>
<dbReference type="PDB" id="7ACJ">
    <property type="method" value="EM"/>
    <property type="resolution" value="3.20 A"/>
    <property type="chains" value="y=2-87"/>
</dbReference>
<dbReference type="PDB" id="7ACR">
    <property type="method" value="EM"/>
    <property type="resolution" value="3.44 A"/>
    <property type="chains" value="y=2-87"/>
</dbReference>
<dbReference type="PDB" id="7AFI">
    <property type="method" value="EM"/>
    <property type="resolution" value="3.53 A"/>
    <property type="chains" value="T=1-87"/>
</dbReference>
<dbReference type="PDB" id="7AFL">
    <property type="method" value="EM"/>
    <property type="resolution" value="4.20 A"/>
    <property type="chains" value="T=1-87"/>
</dbReference>
<dbReference type="PDB" id="7AFO">
    <property type="method" value="EM"/>
    <property type="resolution" value="3.93 A"/>
    <property type="chains" value="T=1-87"/>
</dbReference>
<dbReference type="PDB" id="7B5K">
    <property type="method" value="EM"/>
    <property type="resolution" value="2.90 A"/>
    <property type="chains" value="t=2-87"/>
</dbReference>
<dbReference type="PDB" id="7BOD">
    <property type="method" value="EM"/>
    <property type="resolution" value="2.88 A"/>
    <property type="chains" value="T=1-87"/>
</dbReference>
<dbReference type="PDB" id="7BOE">
    <property type="method" value="EM"/>
    <property type="resolution" value="2.90 A"/>
    <property type="chains" value="T=1-87"/>
</dbReference>
<dbReference type="PDB" id="7BOF">
    <property type="method" value="EM"/>
    <property type="resolution" value="2.92 A"/>
    <property type="chains" value="T=1-87"/>
</dbReference>
<dbReference type="PDB" id="7BOG">
    <property type="method" value="EM"/>
    <property type="resolution" value="2.75 A"/>
    <property type="chains" value="T=1-87"/>
</dbReference>
<dbReference type="PDB" id="7BOH">
    <property type="method" value="EM"/>
    <property type="resolution" value="2.82 A"/>
    <property type="chains" value="T=1-87"/>
</dbReference>
<dbReference type="PDB" id="7BOI">
    <property type="method" value="EM"/>
    <property type="resolution" value="2.98 A"/>
    <property type="chains" value="T=1-87"/>
</dbReference>
<dbReference type="PDB" id="7D6Z">
    <property type="method" value="EM"/>
    <property type="resolution" value="3.40 A"/>
    <property type="chains" value="0=1-87"/>
</dbReference>
<dbReference type="PDB" id="7D80">
    <property type="method" value="EM"/>
    <property type="resolution" value="4.10 A"/>
    <property type="chains" value="U=1-87"/>
</dbReference>
<dbReference type="PDB" id="7JSS">
    <property type="method" value="EM"/>
    <property type="resolution" value="3.70 A"/>
    <property type="chains" value="Y=3-87"/>
</dbReference>
<dbReference type="PDB" id="7JSW">
    <property type="method" value="EM"/>
    <property type="resolution" value="3.80 A"/>
    <property type="chains" value="Y=3-87"/>
</dbReference>
<dbReference type="PDB" id="7JSZ">
    <property type="method" value="EM"/>
    <property type="resolution" value="3.70 A"/>
    <property type="chains" value="Y=3-87"/>
</dbReference>
<dbReference type="PDB" id="7JT1">
    <property type="method" value="EM"/>
    <property type="resolution" value="3.30 A"/>
    <property type="chains" value="Y=3-87"/>
</dbReference>
<dbReference type="PDB" id="7JT2">
    <property type="method" value="EM"/>
    <property type="resolution" value="3.50 A"/>
    <property type="chains" value="Y=3-87"/>
</dbReference>
<dbReference type="PDB" id="7JT3">
    <property type="method" value="EM"/>
    <property type="resolution" value="3.70 A"/>
    <property type="chains" value="Y=3-87"/>
</dbReference>
<dbReference type="PDB" id="7K00">
    <property type="method" value="EM"/>
    <property type="resolution" value="1.98 A"/>
    <property type="chains" value="T=1-87"/>
</dbReference>
<dbReference type="PDB" id="7K50">
    <property type="method" value="EM"/>
    <property type="resolution" value="3.40 A"/>
    <property type="chains" value="Y=3-87"/>
</dbReference>
<dbReference type="PDB" id="7K51">
    <property type="method" value="EM"/>
    <property type="resolution" value="3.50 A"/>
    <property type="chains" value="Y=3-87"/>
</dbReference>
<dbReference type="PDB" id="7K52">
    <property type="method" value="EM"/>
    <property type="resolution" value="3.40 A"/>
    <property type="chains" value="Y=3-87"/>
</dbReference>
<dbReference type="PDB" id="7K53">
    <property type="method" value="EM"/>
    <property type="resolution" value="3.20 A"/>
    <property type="chains" value="Y=3-87"/>
</dbReference>
<dbReference type="PDB" id="7K54">
    <property type="method" value="EM"/>
    <property type="resolution" value="3.20 A"/>
    <property type="chains" value="Y=3-87"/>
</dbReference>
<dbReference type="PDB" id="7K55">
    <property type="method" value="EM"/>
    <property type="resolution" value="3.30 A"/>
    <property type="chains" value="Y=3-87"/>
</dbReference>
<dbReference type="PDB" id="7LV0">
    <property type="method" value="EM"/>
    <property type="resolution" value="3.20 A"/>
    <property type="chains" value="Y=3-87"/>
</dbReference>
<dbReference type="PDB" id="7M5D">
    <property type="method" value="EM"/>
    <property type="resolution" value="2.80 A"/>
    <property type="chains" value="y=2-87"/>
</dbReference>
<dbReference type="PDB" id="7N1P">
    <property type="method" value="EM"/>
    <property type="resolution" value="2.33 A"/>
    <property type="chains" value="ST=1-87"/>
</dbReference>
<dbReference type="PDB" id="7N2C">
    <property type="method" value="EM"/>
    <property type="resolution" value="2.72 A"/>
    <property type="chains" value="ST=1-87"/>
</dbReference>
<dbReference type="PDB" id="7N2U">
    <property type="method" value="EM"/>
    <property type="resolution" value="2.53 A"/>
    <property type="chains" value="ST=1-87"/>
</dbReference>
<dbReference type="PDB" id="7N2V">
    <property type="method" value="EM"/>
    <property type="resolution" value="2.54 A"/>
    <property type="chains" value="ST=1-87"/>
</dbReference>
<dbReference type="PDB" id="7N30">
    <property type="method" value="EM"/>
    <property type="resolution" value="2.66 A"/>
    <property type="chains" value="ST=1-87"/>
</dbReference>
<dbReference type="PDB" id="7N31">
    <property type="method" value="EM"/>
    <property type="resolution" value="2.69 A"/>
    <property type="chains" value="ST=1-87"/>
</dbReference>
<dbReference type="PDB" id="7NAR">
    <property type="method" value="EM"/>
    <property type="resolution" value="3.00 A"/>
    <property type="chains" value="T=1-87"/>
</dbReference>
<dbReference type="PDB" id="7NAS">
    <property type="method" value="EM"/>
    <property type="resolution" value="3.31 A"/>
    <property type="chains" value="T=1-87"/>
</dbReference>
<dbReference type="PDB" id="7NAT">
    <property type="method" value="EM"/>
    <property type="resolution" value="3.59 A"/>
    <property type="chains" value="T=1-87"/>
</dbReference>
<dbReference type="PDB" id="7NAU">
    <property type="method" value="EM"/>
    <property type="resolution" value="3.78 A"/>
    <property type="chains" value="T=1-87"/>
</dbReference>
<dbReference type="PDB" id="7NAV">
    <property type="method" value="EM"/>
    <property type="resolution" value="4.80 A"/>
    <property type="chains" value="T=1-87"/>
</dbReference>
<dbReference type="PDB" id="7NAX">
    <property type="method" value="EM"/>
    <property type="resolution" value="2.96 A"/>
    <property type="chains" value="T=1-87"/>
</dbReference>
<dbReference type="PDB" id="7NBU">
    <property type="method" value="EM"/>
    <property type="resolution" value="3.11 A"/>
    <property type="chains" value="T=2-87"/>
</dbReference>
<dbReference type="PDB" id="7O19">
    <property type="method" value="EM"/>
    <property type="resolution" value="2.90 A"/>
    <property type="chains" value="AT=1-87"/>
</dbReference>
<dbReference type="PDB" id="7O1A">
    <property type="method" value="EM"/>
    <property type="resolution" value="2.40 A"/>
    <property type="chains" value="AT=1-87"/>
</dbReference>
<dbReference type="PDB" id="7O1C">
    <property type="method" value="EM"/>
    <property type="resolution" value="2.60 A"/>
    <property type="chains" value="AT=1-87"/>
</dbReference>
<dbReference type="PDB" id="7O5H">
    <property type="method" value="EM"/>
    <property type="resolution" value="3.10 A"/>
    <property type="chains" value="T=2-87"/>
</dbReference>
<dbReference type="PDB" id="7OE0">
    <property type="method" value="EM"/>
    <property type="resolution" value="2.69 A"/>
    <property type="chains" value="T=2-87"/>
</dbReference>
<dbReference type="PDB" id="7OE1">
    <property type="method" value="EM"/>
    <property type="resolution" value="3.05 A"/>
    <property type="chains" value="T=2-87"/>
</dbReference>
<dbReference type="PDB" id="7OI0">
    <property type="method" value="EM"/>
    <property type="resolution" value="2.76 A"/>
    <property type="chains" value="T=2-87"/>
</dbReference>
<dbReference type="PDB" id="7OIZ">
    <property type="method" value="EM"/>
    <property type="resolution" value="2.90 A"/>
    <property type="chains" value="T=1-87"/>
</dbReference>
<dbReference type="PDB" id="7OJ0">
    <property type="method" value="EM"/>
    <property type="resolution" value="3.50 A"/>
    <property type="chains" value="T=1-87"/>
</dbReference>
<dbReference type="PDB" id="7P3K">
    <property type="method" value="EM"/>
    <property type="resolution" value="2.90 A"/>
    <property type="chains" value="T=1-87"/>
</dbReference>
<dbReference type="PDB" id="7PJU">
    <property type="method" value="EM"/>
    <property type="resolution" value="9.50 A"/>
    <property type="chains" value="t=1-87"/>
</dbReference>
<dbReference type="PDB" id="7PJV">
    <property type="method" value="EM"/>
    <property type="resolution" value="3.10 A"/>
    <property type="chains" value="t=1-87"/>
</dbReference>
<dbReference type="PDB" id="7PJY">
    <property type="method" value="EM"/>
    <property type="resolution" value="3.10 A"/>
    <property type="chains" value="t=1-87"/>
</dbReference>
<dbReference type="PDB" id="7QG8">
    <property type="method" value="EM"/>
    <property type="resolution" value="3.97 A"/>
    <property type="chains" value="u=1-87"/>
</dbReference>
<dbReference type="PDB" id="7QGH">
    <property type="method" value="EM"/>
    <property type="resolution" value="4.48 A"/>
    <property type="chains" value="K=1-87"/>
</dbReference>
<dbReference type="PDB" id="7QGN">
    <property type="method" value="EM"/>
    <property type="resolution" value="3.37 A"/>
    <property type="chains" value="u=1-87"/>
</dbReference>
<dbReference type="PDB" id="7QGR">
    <property type="method" value="EM"/>
    <property type="resolution" value="5.70 A"/>
    <property type="chains" value="K=1-87"/>
</dbReference>
<dbReference type="PDB" id="7S1G">
    <property type="method" value="EM"/>
    <property type="resolution" value="2.48 A"/>
    <property type="chains" value="2=1-87"/>
</dbReference>
<dbReference type="PDB" id="7S1H">
    <property type="method" value="EM"/>
    <property type="resolution" value="2.35 A"/>
    <property type="chains" value="2=1-87"/>
</dbReference>
<dbReference type="PDB" id="7S1I">
    <property type="method" value="EM"/>
    <property type="resolution" value="2.48 A"/>
    <property type="chains" value="2=1-87"/>
</dbReference>
<dbReference type="PDB" id="7S1J">
    <property type="method" value="EM"/>
    <property type="resolution" value="2.47 A"/>
    <property type="chains" value="2=1-87"/>
</dbReference>
<dbReference type="PDB" id="7S1K">
    <property type="method" value="EM"/>
    <property type="resolution" value="2.42 A"/>
    <property type="chains" value="2=1-87"/>
</dbReference>
<dbReference type="PDB" id="7SA4">
    <property type="method" value="EM"/>
    <property type="resolution" value="2.55 A"/>
    <property type="chains" value="y=1-87"/>
</dbReference>
<dbReference type="PDB" id="7SS9">
    <property type="method" value="EM"/>
    <property type="resolution" value="3.90 A"/>
    <property type="chains" value="Y=3-87"/>
</dbReference>
<dbReference type="PDB" id="7SSD">
    <property type="method" value="EM"/>
    <property type="resolution" value="3.30 A"/>
    <property type="chains" value="Y=3-87"/>
</dbReference>
<dbReference type="PDB" id="7SSL">
    <property type="method" value="EM"/>
    <property type="resolution" value="3.80 A"/>
    <property type="chains" value="Y=3-87"/>
</dbReference>
<dbReference type="PDB" id="7SSN">
    <property type="method" value="EM"/>
    <property type="resolution" value="3.20 A"/>
    <property type="chains" value="Y=3-87"/>
</dbReference>
<dbReference type="PDB" id="7SSO">
    <property type="method" value="EM"/>
    <property type="resolution" value="3.20 A"/>
    <property type="chains" value="Y=3-87"/>
</dbReference>
<dbReference type="PDB" id="7SSW">
    <property type="method" value="EM"/>
    <property type="resolution" value="3.80 A"/>
    <property type="chains" value="Y=3-87"/>
</dbReference>
<dbReference type="PDB" id="7ST2">
    <property type="method" value="EM"/>
    <property type="resolution" value="2.90 A"/>
    <property type="chains" value="Y=3-87"/>
</dbReference>
<dbReference type="PDB" id="7ST6">
    <property type="method" value="EM"/>
    <property type="resolution" value="3.00 A"/>
    <property type="chains" value="Y=3-87"/>
</dbReference>
<dbReference type="PDB" id="7ST7">
    <property type="method" value="EM"/>
    <property type="resolution" value="3.20 A"/>
    <property type="chains" value="Y=3-87"/>
</dbReference>
<dbReference type="PDB" id="7TOS">
    <property type="method" value="EM"/>
    <property type="resolution" value="2.90 A"/>
    <property type="chains" value="S20=3-87"/>
</dbReference>
<dbReference type="PDB" id="7UG7">
    <property type="method" value="EM"/>
    <property type="resolution" value="2.58 A"/>
    <property type="chains" value="ST=1-87"/>
</dbReference>
<dbReference type="PDB" id="7UPH">
    <property type="method" value="EM"/>
    <property type="resolution" value="4.18 A"/>
    <property type="chains" value="G=3-87"/>
</dbReference>
<dbReference type="PDB" id="7Y7C">
    <property type="method" value="EM"/>
    <property type="resolution" value="2.51 A"/>
    <property type="chains" value="T=1-87"/>
</dbReference>
<dbReference type="PDB" id="7Y7D">
    <property type="method" value="EM"/>
    <property type="resolution" value="2.58 A"/>
    <property type="chains" value="T=1-87"/>
</dbReference>
<dbReference type="PDB" id="7Y7E">
    <property type="method" value="EM"/>
    <property type="resolution" value="2.41 A"/>
    <property type="chains" value="T=1-87"/>
</dbReference>
<dbReference type="PDB" id="7Y7F">
    <property type="method" value="EM"/>
    <property type="resolution" value="2.43 A"/>
    <property type="chains" value="T=1-87"/>
</dbReference>
<dbReference type="PDB" id="7Y7G">
    <property type="method" value="EM"/>
    <property type="resolution" value="2.34 A"/>
    <property type="chains" value="T=1-87"/>
</dbReference>
<dbReference type="PDB" id="7Y7H">
    <property type="method" value="EM"/>
    <property type="resolution" value="2.51 A"/>
    <property type="chains" value="T=1-87"/>
</dbReference>
<dbReference type="PDB" id="7ZTA">
    <property type="method" value="EM"/>
    <property type="resolution" value="2.70 A"/>
    <property type="chains" value="S201=2-87"/>
</dbReference>
<dbReference type="PDB" id="8A3L">
    <property type="method" value="EM"/>
    <property type="resolution" value="3.42 A"/>
    <property type="chains" value="T=1-87"/>
</dbReference>
<dbReference type="PDB" id="8AKN">
    <property type="method" value="EM"/>
    <property type="resolution" value="2.30 A"/>
    <property type="chains" value="U=1-87"/>
</dbReference>
<dbReference type="PDB" id="8AM9">
    <property type="method" value="EM"/>
    <property type="resolution" value="2.80 A"/>
    <property type="chains" value="U=1-87"/>
</dbReference>
<dbReference type="PDB" id="8AYE">
    <property type="method" value="EM"/>
    <property type="resolution" value="1.96 A"/>
    <property type="chains" value="T=1-87"/>
</dbReference>
<dbReference type="PDB" id="8B0X">
    <property type="method" value="EM"/>
    <property type="resolution" value="1.55 A"/>
    <property type="chains" value="T=1-87"/>
</dbReference>
<dbReference type="PDB" id="8B7Y">
    <property type="method" value="EM"/>
    <property type="resolution" value="3.00 A"/>
    <property type="chains" value="y=1-87"/>
</dbReference>
<dbReference type="PDB" id="8BF7">
    <property type="method" value="EM"/>
    <property type="resolution" value="2.33 A"/>
    <property type="chains" value="x=1-87"/>
</dbReference>
<dbReference type="PDB" id="8BGE">
    <property type="method" value="EM"/>
    <property type="resolution" value="2.11 A"/>
    <property type="chains" value="x=1-87"/>
</dbReference>
<dbReference type="PDB" id="8BGH">
    <property type="method" value="EM"/>
    <property type="resolution" value="2.88 A"/>
    <property type="chains" value="x=1-87"/>
</dbReference>
<dbReference type="PDB" id="8BH4">
    <property type="method" value="EM"/>
    <property type="resolution" value="2.62 A"/>
    <property type="chains" value="x=1-87"/>
</dbReference>
<dbReference type="PDB" id="8BHJ">
    <property type="method" value="EM"/>
    <property type="resolution" value="2.81 A"/>
    <property type="chains" value="x=1-87"/>
</dbReference>
<dbReference type="PDB" id="8BHL">
    <property type="method" value="EM"/>
    <property type="resolution" value="2.21 A"/>
    <property type="chains" value="x=1-87"/>
</dbReference>
<dbReference type="PDB" id="8BHN">
    <property type="method" value="EM"/>
    <property type="resolution" value="2.85 A"/>
    <property type="chains" value="x=1-87"/>
</dbReference>
<dbReference type="PDB" id="8BHP">
    <property type="method" value="EM"/>
    <property type="resolution" value="2.37 A"/>
    <property type="chains" value="x=1-87"/>
</dbReference>
<dbReference type="PDB" id="8BIL">
    <property type="method" value="EM"/>
    <property type="resolution" value="2.04 A"/>
    <property type="chains" value="x=1-87"/>
</dbReference>
<dbReference type="PDB" id="8BIM">
    <property type="method" value="EM"/>
    <property type="resolution" value="2.04 A"/>
    <property type="chains" value="x=1-87"/>
</dbReference>
<dbReference type="PDB" id="8CAI">
    <property type="method" value="EM"/>
    <property type="resolution" value="2.08 A"/>
    <property type="chains" value="T=1-87"/>
</dbReference>
<dbReference type="PDB" id="8CEP">
    <property type="method" value="EM"/>
    <property type="resolution" value="2.04 A"/>
    <property type="chains" value="T=1-87"/>
</dbReference>
<dbReference type="PDB" id="8CGJ">
    <property type="method" value="EM"/>
    <property type="resolution" value="1.79 A"/>
    <property type="chains" value="T=1-87"/>
</dbReference>
<dbReference type="PDB" id="8CGR">
    <property type="method" value="EM"/>
    <property type="resolution" value="2.12 A"/>
    <property type="chains" value="T=1-87"/>
</dbReference>
<dbReference type="PDB" id="8CGU">
    <property type="method" value="EM"/>
    <property type="resolution" value="1.89 A"/>
    <property type="chains" value="T=1-87"/>
</dbReference>
<dbReference type="PDB" id="8EIU">
    <property type="method" value="EM"/>
    <property type="resolution" value="2.24 A"/>
    <property type="chains" value="T=1-87"/>
</dbReference>
<dbReference type="PDB" id="8EKC">
    <property type="method" value="EM"/>
    <property type="resolution" value="2.70 A"/>
    <property type="chains" value="t=1-87"/>
</dbReference>
<dbReference type="PDB" id="8EMM">
    <property type="method" value="EM"/>
    <property type="resolution" value="2.10 A"/>
    <property type="chains" value="T=1-87"/>
</dbReference>
<dbReference type="PDB" id="8EYQ">
    <property type="method" value="EM"/>
    <property type="resolution" value="3.30 A"/>
    <property type="chains" value="T=1-87"/>
</dbReference>
<dbReference type="PDB" id="8EYT">
    <property type="method" value="EM"/>
    <property type="resolution" value="2.80 A"/>
    <property type="chains" value="T=1-87"/>
</dbReference>
<dbReference type="PDB" id="8FIZ">
    <property type="method" value="EM"/>
    <property type="resolution" value="3.80 A"/>
    <property type="chains" value="AB=1-87"/>
</dbReference>
<dbReference type="PDB" id="8FTO">
    <property type="method" value="EM"/>
    <property type="resolution" value="1.85 A"/>
    <property type="chains" value="T=1-87"/>
</dbReference>
<dbReference type="PDB" id="8FZD">
    <property type="method" value="EM"/>
    <property type="resolution" value="3.10 A"/>
    <property type="chains" value="t=1-87"/>
</dbReference>
<dbReference type="PDB" id="8FZE">
    <property type="method" value="EM"/>
    <property type="resolution" value="3.00 A"/>
    <property type="chains" value="t=1-87"/>
</dbReference>
<dbReference type="PDB" id="8FZF">
    <property type="method" value="EM"/>
    <property type="resolution" value="3.20 A"/>
    <property type="chains" value="t=1-87"/>
</dbReference>
<dbReference type="PDB" id="8FZG">
    <property type="method" value="EM"/>
    <property type="resolution" value="3.10 A"/>
    <property type="chains" value="t=1-87"/>
</dbReference>
<dbReference type="PDB" id="8FZH">
    <property type="method" value="EM"/>
    <property type="resolution" value="2.90 A"/>
    <property type="chains" value="t=1-87"/>
</dbReference>
<dbReference type="PDB" id="8FZI">
    <property type="method" value="EM"/>
    <property type="resolution" value="3.10 A"/>
    <property type="chains" value="t=1-87"/>
</dbReference>
<dbReference type="PDB" id="8FZJ">
    <property type="method" value="EM"/>
    <property type="resolution" value="3.00 A"/>
    <property type="chains" value="t=1-87"/>
</dbReference>
<dbReference type="PDB" id="8G2U">
    <property type="method" value="EM"/>
    <property type="resolution" value="3.00 A"/>
    <property type="chains" value="s=3-87"/>
</dbReference>
<dbReference type="PDB" id="8G31">
    <property type="method" value="EM"/>
    <property type="resolution" value="3.20 A"/>
    <property type="chains" value="s=3-87"/>
</dbReference>
<dbReference type="PDB" id="8G34">
    <property type="method" value="EM"/>
    <property type="resolution" value="3.20 A"/>
    <property type="chains" value="s=3-87"/>
</dbReference>
<dbReference type="PDB" id="8G38">
    <property type="method" value="EM"/>
    <property type="resolution" value="3.20 A"/>
    <property type="chains" value="s=3-87"/>
</dbReference>
<dbReference type="PDB" id="8G6W">
    <property type="method" value="EM"/>
    <property type="resolution" value="2.02 A"/>
    <property type="chains" value="T=1-87"/>
</dbReference>
<dbReference type="PDB" id="8G7P">
    <property type="method" value="EM"/>
    <property type="resolution" value="2.90 A"/>
    <property type="chains" value="t=1-87"/>
</dbReference>
<dbReference type="PDB" id="8G7Q">
    <property type="method" value="EM"/>
    <property type="resolution" value="3.10 A"/>
    <property type="chains" value="t=1-87"/>
</dbReference>
<dbReference type="PDB" id="8G7R">
    <property type="method" value="EM"/>
    <property type="resolution" value="2.80 A"/>
    <property type="chains" value="t=1-87"/>
</dbReference>
<dbReference type="PDB" id="8G7S">
    <property type="method" value="EM"/>
    <property type="resolution" value="3.10 A"/>
    <property type="chains" value="t=1-87"/>
</dbReference>
<dbReference type="PDB" id="8GHU">
    <property type="method" value="EM"/>
    <property type="resolution" value="3.00 A"/>
    <property type="chains" value="t=3-87"/>
</dbReference>
<dbReference type="PDB" id="8HSP">
    <property type="method" value="EM"/>
    <property type="resolution" value="2.32 A"/>
    <property type="chains" value="T=1-87"/>
</dbReference>
<dbReference type="PDB" id="8HTZ">
    <property type="method" value="EM"/>
    <property type="resolution" value="2.40 A"/>
    <property type="chains" value="T=1-87"/>
</dbReference>
<dbReference type="PDB" id="8HU1">
    <property type="method" value="EM"/>
    <property type="resolution" value="2.69 A"/>
    <property type="chains" value="T=1-87"/>
</dbReference>
<dbReference type="PDB" id="8IFB">
    <property type="method" value="EM"/>
    <property type="resolution" value="2.43 A"/>
    <property type="chains" value="T=1-87"/>
</dbReference>
<dbReference type="PDB" id="8IFC">
    <property type="method" value="EM"/>
    <property type="resolution" value="2.90 A"/>
    <property type="chains" value="T=1-87"/>
</dbReference>
<dbReference type="PDB" id="8JSG">
    <property type="method" value="EM"/>
    <property type="resolution" value="4.60 A"/>
    <property type="chains" value="3=2-87"/>
</dbReference>
<dbReference type="PDB" id="8JSH">
    <property type="method" value="EM"/>
    <property type="resolution" value="4.40 A"/>
    <property type="chains" value="3=1-87"/>
</dbReference>
<dbReference type="PDB" id="8K3O">
    <property type="method" value="EM"/>
    <property type="resolution" value="3.88 A"/>
    <property type="chains" value="T=1-87"/>
</dbReference>
<dbReference type="PDB" id="8K4E">
    <property type="method" value="EM"/>
    <property type="resolution" value="3.40 A"/>
    <property type="chains" value="T=1-87"/>
</dbReference>
<dbReference type="PDB" id="8P16">
    <property type="method" value="EM"/>
    <property type="resolution" value="2.77 A"/>
    <property type="chains" value="y=1-87"/>
</dbReference>
<dbReference type="PDB" id="8P17">
    <property type="method" value="EM"/>
    <property type="resolution" value="2.78 A"/>
    <property type="chains" value="y=1-87"/>
</dbReference>
<dbReference type="PDB" id="8P18">
    <property type="method" value="EM"/>
    <property type="resolution" value="2.77 A"/>
    <property type="chains" value="y=1-87"/>
</dbReference>
<dbReference type="PDB" id="8PEG">
    <property type="method" value="EM"/>
    <property type="resolution" value="3.30 A"/>
    <property type="chains" value="T=1-87"/>
</dbReference>
<dbReference type="PDB" id="8PHJ">
    <property type="method" value="EM"/>
    <property type="resolution" value="3.67 A"/>
    <property type="chains" value="T=1-87"/>
</dbReference>
<dbReference type="PDB" id="8PKL">
    <property type="method" value="EM"/>
    <property type="resolution" value="3.09 A"/>
    <property type="chains" value="T=1-87"/>
</dbReference>
<dbReference type="PDB" id="8PVA">
    <property type="method" value="EM"/>
    <property type="resolution" value="4.50 A"/>
    <property type="chains" value="T=1-87"/>
</dbReference>
<dbReference type="PDB" id="8Q4F">
    <property type="method" value="EM"/>
    <property type="resolution" value="3.10 A"/>
    <property type="chains" value="T=1-87"/>
</dbReference>
<dbReference type="PDB" id="8QBT">
    <property type="method" value="EM"/>
    <property type="resolution" value="2.20 A"/>
    <property type="chains" value="2=1-87"/>
</dbReference>
<dbReference type="PDB" id="8QK7">
    <property type="method" value="EM"/>
    <property type="resolution" value="2.77 A"/>
    <property type="chains" value="y=1-87"/>
</dbReference>
<dbReference type="PDB" id="8QOA">
    <property type="method" value="EM"/>
    <property type="resolution" value="2.00 A"/>
    <property type="chains" value="T=1-87"/>
</dbReference>
<dbReference type="PDB" id="8R3V">
    <property type="method" value="EM"/>
    <property type="resolution" value="3.28 A"/>
    <property type="chains" value="T1=1-87"/>
</dbReference>
<dbReference type="PDB" id="8R6C">
    <property type="method" value="EM"/>
    <property type="resolution" value="2.20 A"/>
    <property type="chains" value="T=1-87"/>
</dbReference>
<dbReference type="PDB" id="8R8M">
    <property type="method" value="EM"/>
    <property type="resolution" value="2.40 A"/>
    <property type="chains" value="T=1-87"/>
</dbReference>
<dbReference type="PDB" id="8RCL">
    <property type="method" value="EM"/>
    <property type="resolution" value="3.49 A"/>
    <property type="chains" value="T1=1-87"/>
</dbReference>
<dbReference type="PDB" id="8RCM">
    <property type="method" value="EM"/>
    <property type="resolution" value="3.59 A"/>
    <property type="chains" value="T1=1-87"/>
</dbReference>
<dbReference type="PDB" id="8RCS">
    <property type="method" value="EM"/>
    <property type="resolution" value="4.46 A"/>
    <property type="chains" value="T1=1-87"/>
</dbReference>
<dbReference type="PDB" id="8RCT">
    <property type="method" value="EM"/>
    <property type="resolution" value="5.32 A"/>
    <property type="chains" value="T1=1-87"/>
</dbReference>
<dbReference type="PDB" id="8SYL">
    <property type="method" value="EM"/>
    <property type="resolution" value="2.90 A"/>
    <property type="chains" value="t=1-87"/>
</dbReference>
<dbReference type="PDB" id="8T5D">
    <property type="method" value="EM"/>
    <property type="resolution" value="3.20 A"/>
    <property type="chains" value="s=3-87"/>
</dbReference>
<dbReference type="PDB" id="8T5H">
    <property type="method" value="EM"/>
    <property type="resolution" value="3.30 A"/>
    <property type="chains" value="s=3-87"/>
</dbReference>
<dbReference type="PDB" id="8UPO">
    <property type="method" value="EM"/>
    <property type="resolution" value="5.50 A"/>
    <property type="chains" value="E=1-87"/>
</dbReference>
<dbReference type="PDB" id="8UPR">
    <property type="method" value="EM"/>
    <property type="resolution" value="5.30 A"/>
    <property type="chains" value="E=1-87"/>
</dbReference>
<dbReference type="PDB" id="8UQL">
    <property type="method" value="EM"/>
    <property type="resolution" value="3.20 A"/>
    <property type="chains" value="E=1-87"/>
</dbReference>
<dbReference type="PDB" id="8UQM">
    <property type="method" value="EM"/>
    <property type="resolution" value="5.30 A"/>
    <property type="chains" value="E=1-87"/>
</dbReference>
<dbReference type="PDB" id="8UQP">
    <property type="method" value="EM"/>
    <property type="resolution" value="3.80 A"/>
    <property type="chains" value="E=1-87"/>
</dbReference>
<dbReference type="PDB" id="8UR0">
    <property type="method" value="EM"/>
    <property type="resolution" value="3.40 A"/>
    <property type="chains" value="E=1-87"/>
</dbReference>
<dbReference type="PDB" id="8URH">
    <property type="method" value="EM"/>
    <property type="resolution" value="5.70 A"/>
    <property type="chains" value="E=1-87"/>
</dbReference>
<dbReference type="PDB" id="8URI">
    <property type="method" value="EM"/>
    <property type="resolution" value="5.30 A"/>
    <property type="chains" value="E=1-87"/>
</dbReference>
<dbReference type="PDB" id="8URX">
    <property type="method" value="EM"/>
    <property type="resolution" value="6.60 A"/>
    <property type="chains" value="E=1-87"/>
</dbReference>
<dbReference type="PDB" id="8URY">
    <property type="method" value="EM"/>
    <property type="resolution" value="3.10 A"/>
    <property type="chains" value="E=1-87"/>
</dbReference>
<dbReference type="PDB" id="8VS9">
    <property type="method" value="EM"/>
    <property type="resolution" value="3.90 A"/>
    <property type="chains" value="S20=1-87"/>
</dbReference>
<dbReference type="PDB" id="8VSA">
    <property type="method" value="EM"/>
    <property type="resolution" value="3.70 A"/>
    <property type="chains" value="S20=1-87"/>
</dbReference>
<dbReference type="PDB" id="8YUO">
    <property type="method" value="EM"/>
    <property type="resolution" value="2.25 A"/>
    <property type="chains" value="T=1-87"/>
</dbReference>
<dbReference type="PDB" id="8YUP">
    <property type="method" value="EM"/>
    <property type="resolution" value="2.39 A"/>
    <property type="chains" value="T=1-87"/>
</dbReference>
<dbReference type="PDB" id="8YUQ">
    <property type="method" value="EM"/>
    <property type="resolution" value="2.41 A"/>
    <property type="chains" value="T=1-87"/>
</dbReference>
<dbReference type="PDB" id="8YUR">
    <property type="method" value="EM"/>
    <property type="resolution" value="2.47 A"/>
    <property type="chains" value="T=1-87"/>
</dbReference>
<dbReference type="PDB" id="8YUS">
    <property type="method" value="EM"/>
    <property type="resolution" value="2.43 A"/>
    <property type="chains" value="T=1-87"/>
</dbReference>
<dbReference type="PDB" id="9DUK">
    <property type="method" value="EM"/>
    <property type="resolution" value="2.56 A"/>
    <property type="chains" value="T=1-87"/>
</dbReference>
<dbReference type="PDB" id="9DUL">
    <property type="method" value="EM"/>
    <property type="resolution" value="2.56 A"/>
    <property type="chains" value="T=1-87"/>
</dbReference>
<dbReference type="PDB" id="9FBV">
    <property type="method" value="EM"/>
    <property type="resolution" value="2.40 A"/>
    <property type="chains" value="T=1-87"/>
</dbReference>
<dbReference type="PDB" id="9GFT">
    <property type="method" value="EM"/>
    <property type="resolution" value="3.10 A"/>
    <property type="chains" value="AS/u=1-87"/>
</dbReference>
<dbReference type="PDB" id="9GGR">
    <property type="method" value="EM"/>
    <property type="resolution" value="3.20 A"/>
    <property type="chains" value="AS/u=1-87"/>
</dbReference>
<dbReference type="PDB" id="9GUP">
    <property type="method" value="EM"/>
    <property type="resolution" value="2.80 A"/>
    <property type="chains" value="U=1-87"/>
</dbReference>
<dbReference type="PDB" id="9GUQ">
    <property type="method" value="EM"/>
    <property type="resolution" value="3.10 A"/>
    <property type="chains" value="U=1-87"/>
</dbReference>
<dbReference type="PDB" id="9GUS">
    <property type="method" value="EM"/>
    <property type="resolution" value="3.50 A"/>
    <property type="chains" value="U=1-87"/>
</dbReference>
<dbReference type="PDB" id="9GUT">
    <property type="method" value="EM"/>
    <property type="resolution" value="2.80 A"/>
    <property type="chains" value="U=1-87"/>
</dbReference>
<dbReference type="PDB" id="9GUU">
    <property type="method" value="EM"/>
    <property type="resolution" value="2.50 A"/>
    <property type="chains" value="U=1-87"/>
</dbReference>
<dbReference type="PDB" id="9GUV">
    <property type="method" value="EM"/>
    <property type="resolution" value="3.00 A"/>
    <property type="chains" value="U=1-87"/>
</dbReference>
<dbReference type="PDB" id="9GUW">
    <property type="method" value="EM"/>
    <property type="resolution" value="3.10 A"/>
    <property type="chains" value="U=1-87"/>
</dbReference>
<dbReference type="PDB" id="9GUX">
    <property type="method" value="EM"/>
    <property type="resolution" value="3.30 A"/>
    <property type="chains" value="U=1-87"/>
</dbReference>
<dbReference type="PDB" id="9MOR">
    <property type="method" value="EM"/>
    <property type="resolution" value="2.65 A"/>
    <property type="chains" value="y=1-87"/>
</dbReference>
<dbReference type="PDB" id="9MQ4">
    <property type="method" value="EM"/>
    <property type="resolution" value="2.78 A"/>
    <property type="chains" value="y=1-87"/>
</dbReference>
<dbReference type="PDBsum" id="2YKR"/>
<dbReference type="PDBsum" id="3J9Y"/>
<dbReference type="PDBsum" id="3J9Z"/>
<dbReference type="PDBsum" id="3JA1"/>
<dbReference type="PDBsum" id="3JBU"/>
<dbReference type="PDBsum" id="3JBV"/>
<dbReference type="PDBsum" id="3JCD"/>
<dbReference type="PDBsum" id="3JCE"/>
<dbReference type="PDBsum" id="3JCJ"/>
<dbReference type="PDBsum" id="3JCN"/>
<dbReference type="PDBsum" id="4A2I"/>
<dbReference type="PDBsum" id="4ADV"/>
<dbReference type="PDBsum" id="4U1U"/>
<dbReference type="PDBsum" id="4U1V"/>
<dbReference type="PDBsum" id="4U20"/>
<dbReference type="PDBsum" id="4U24"/>
<dbReference type="PDBsum" id="4U25"/>
<dbReference type="PDBsum" id="4U26"/>
<dbReference type="PDBsum" id="4U27"/>
<dbReference type="PDBsum" id="4V47"/>
<dbReference type="PDBsum" id="4V48"/>
<dbReference type="PDBsum" id="4V4H"/>
<dbReference type="PDBsum" id="4V4Q"/>
<dbReference type="PDBsum" id="4V4V"/>
<dbReference type="PDBsum" id="4V4W"/>
<dbReference type="PDBsum" id="4V50"/>
<dbReference type="PDBsum" id="4V52"/>
<dbReference type="PDBsum" id="4V53"/>
<dbReference type="PDBsum" id="4V54"/>
<dbReference type="PDBsum" id="4V55"/>
<dbReference type="PDBsum" id="4V56"/>
<dbReference type="PDBsum" id="4V57"/>
<dbReference type="PDBsum" id="4V5B"/>
<dbReference type="PDBsum" id="4V5H"/>
<dbReference type="PDBsum" id="4V5Y"/>
<dbReference type="PDBsum" id="4V64"/>
<dbReference type="PDBsum" id="4V65"/>
<dbReference type="PDBsum" id="4V66"/>
<dbReference type="PDBsum" id="4V69"/>
<dbReference type="PDBsum" id="4V6C"/>
<dbReference type="PDBsum" id="4V6D"/>
<dbReference type="PDBsum" id="4V6E"/>
<dbReference type="PDBsum" id="4V6K"/>
<dbReference type="PDBsum" id="4V6L"/>
<dbReference type="PDBsum" id="4V6M"/>
<dbReference type="PDBsum" id="4V6N"/>
<dbReference type="PDBsum" id="4V6O"/>
<dbReference type="PDBsum" id="4V6P"/>
<dbReference type="PDBsum" id="4V6Q"/>
<dbReference type="PDBsum" id="4V6R"/>
<dbReference type="PDBsum" id="4V6S"/>
<dbReference type="PDBsum" id="4V6T"/>
<dbReference type="PDBsum" id="4V6V"/>
<dbReference type="PDBsum" id="4V6Y"/>
<dbReference type="PDBsum" id="4V6Z"/>
<dbReference type="PDBsum" id="4V70"/>
<dbReference type="PDBsum" id="4V71"/>
<dbReference type="PDBsum" id="4V72"/>
<dbReference type="PDBsum" id="4V73"/>
<dbReference type="PDBsum" id="4V74"/>
<dbReference type="PDBsum" id="4V75"/>
<dbReference type="PDBsum" id="4V76"/>
<dbReference type="PDBsum" id="4V77"/>
<dbReference type="PDBsum" id="4V78"/>
<dbReference type="PDBsum" id="4V79"/>
<dbReference type="PDBsum" id="4V7A"/>
<dbReference type="PDBsum" id="4V7B"/>
<dbReference type="PDBsum" id="4V7C"/>
<dbReference type="PDBsum" id="4V7D"/>
<dbReference type="PDBsum" id="4V7I"/>
<dbReference type="PDBsum" id="4V7S"/>
<dbReference type="PDBsum" id="4V7T"/>
<dbReference type="PDBsum" id="4V7U"/>
<dbReference type="PDBsum" id="4V7V"/>
<dbReference type="PDBsum" id="4V85"/>
<dbReference type="PDBsum" id="4V89"/>
<dbReference type="PDBsum" id="4V9C"/>
<dbReference type="PDBsum" id="4V9D"/>
<dbReference type="PDBsum" id="4V9O"/>
<dbReference type="PDBsum" id="4V9P"/>
<dbReference type="PDBsum" id="4WF1"/>
<dbReference type="PDBsum" id="4WOI"/>
<dbReference type="PDBsum" id="4WWW"/>
<dbReference type="PDBsum" id="4YBB"/>
<dbReference type="PDBsum" id="5AFI"/>
<dbReference type="PDBsum" id="5H5U"/>
<dbReference type="PDBsum" id="5IQR"/>
<dbReference type="PDBsum" id="5IT8"/>
<dbReference type="PDBsum" id="5J5B"/>
<dbReference type="PDBsum" id="5J7L"/>
<dbReference type="PDBsum" id="5J88"/>
<dbReference type="PDBsum" id="5J8A"/>
<dbReference type="PDBsum" id="5J91"/>
<dbReference type="PDBsum" id="5JC9"/>
<dbReference type="PDBsum" id="5JTE"/>
<dbReference type="PDBsum" id="5JU8"/>
<dbReference type="PDBsum" id="5KCR"/>
<dbReference type="PDBsum" id="5KCS"/>
<dbReference type="PDBsum" id="5KPS"/>
<dbReference type="PDBsum" id="5KPV"/>
<dbReference type="PDBsum" id="5KPW"/>
<dbReference type="PDBsum" id="5KPX"/>
<dbReference type="PDBsum" id="5L3P"/>
<dbReference type="PDBsum" id="5LZA"/>
<dbReference type="PDBsum" id="5LZB"/>
<dbReference type="PDBsum" id="5LZC"/>
<dbReference type="PDBsum" id="5LZD"/>
<dbReference type="PDBsum" id="5LZE"/>
<dbReference type="PDBsum" id="5LZF"/>
<dbReference type="PDBsum" id="5MDV"/>
<dbReference type="PDBsum" id="5MDW"/>
<dbReference type="PDBsum" id="5MDY"/>
<dbReference type="PDBsum" id="5MDZ"/>
<dbReference type="PDBsum" id="5ME0"/>
<dbReference type="PDBsum" id="5ME1"/>
<dbReference type="PDBsum" id="5MGP"/>
<dbReference type="PDBsum" id="5MY1"/>
<dbReference type="PDBsum" id="5NO2"/>
<dbReference type="PDBsum" id="5NO3"/>
<dbReference type="PDBsum" id="5NO4"/>
<dbReference type="PDBsum" id="5NP6"/>
<dbReference type="PDBsum" id="5NWY"/>
<dbReference type="PDBsum" id="5O2R"/>
<dbReference type="PDBsum" id="5U4I"/>
<dbReference type="PDBsum" id="5U9F"/>
<dbReference type="PDBsum" id="5U9G"/>
<dbReference type="PDBsum" id="5UYK"/>
<dbReference type="PDBsum" id="5UYL"/>
<dbReference type="PDBsum" id="5UYM"/>
<dbReference type="PDBsum" id="5UYN"/>
<dbReference type="PDBsum" id="5UYP"/>
<dbReference type="PDBsum" id="5UYQ"/>
<dbReference type="PDBsum" id="5UZ4"/>
<dbReference type="PDBsum" id="5WDT"/>
<dbReference type="PDBsum" id="5WE4"/>
<dbReference type="PDBsum" id="5WE6"/>
<dbReference type="PDBsum" id="5WF0"/>
<dbReference type="PDBsum" id="5WFK"/>
<dbReference type="PDBsum" id="5WFS"/>
<dbReference type="PDBsum" id="6AWB"/>
<dbReference type="PDBsum" id="6AWC"/>
<dbReference type="PDBsum" id="6AWD"/>
<dbReference type="PDBsum" id="6BU8"/>
<dbReference type="PDBsum" id="6BY1"/>
<dbReference type="PDBsum" id="6C4I"/>
<dbReference type="PDBsum" id="6DNC"/>
<dbReference type="PDBsum" id="6ENF"/>
<dbReference type="PDBsum" id="6ENJ"/>
<dbReference type="PDBsum" id="6ENU"/>
<dbReference type="PDBsum" id="6GWT"/>
<dbReference type="PDBsum" id="6GXM"/>
<dbReference type="PDBsum" id="6GXN"/>
<dbReference type="PDBsum" id="6GXO"/>
<dbReference type="PDBsum" id="6GXP"/>
<dbReference type="PDBsum" id="6H4N"/>
<dbReference type="PDBsum" id="6H58"/>
<dbReference type="PDBsum" id="6HRM"/>
<dbReference type="PDBsum" id="6I7V"/>
<dbReference type="PDBsum" id="6NQB"/>
<dbReference type="PDBsum" id="6O7K"/>
<dbReference type="PDBsum" id="6O9J"/>
<dbReference type="PDBsum" id="6O9K"/>
<dbReference type="PDBsum" id="6OFX"/>
<dbReference type="PDBsum" id="6OG7"/>
<dbReference type="PDBsum" id="6OGF"/>
<dbReference type="PDBsum" id="6OGG"/>
<dbReference type="PDBsum" id="6OGI"/>
<dbReference type="PDBsum" id="6OM6"/>
<dbReference type="PDBsum" id="6ORE"/>
<dbReference type="PDBsum" id="6ORL"/>
<dbReference type="PDBsum" id="6OSK"/>
<dbReference type="PDBsum" id="6OSQ"/>
<dbReference type="PDBsum" id="6OST"/>
<dbReference type="PDBsum" id="6OT3"/>
<dbReference type="PDBsum" id="6OUO"/>
<dbReference type="PDBsum" id="6Q97"/>
<dbReference type="PDBsum" id="6Q98"/>
<dbReference type="PDBsum" id="6Q9A"/>
<dbReference type="PDBsum" id="6SZS"/>
<dbReference type="PDBsum" id="6TBV"/>
<dbReference type="PDBsum" id="6TC3"/>
<dbReference type="PDBsum" id="6VU3"/>
<dbReference type="PDBsum" id="6VYQ"/>
<dbReference type="PDBsum" id="6VYR"/>
<dbReference type="PDBsum" id="6VYS"/>
<dbReference type="PDBsum" id="6VYT"/>
<dbReference type="PDBsum" id="6VYU"/>
<dbReference type="PDBsum" id="6VYW"/>
<dbReference type="PDBsum" id="6VYX"/>
<dbReference type="PDBsum" id="6VYY"/>
<dbReference type="PDBsum" id="6VYZ"/>
<dbReference type="PDBsum" id="6VZ2"/>
<dbReference type="PDBsum" id="6VZ3"/>
<dbReference type="PDBsum" id="6VZ5"/>
<dbReference type="PDBsum" id="6VZ7"/>
<dbReference type="PDBsum" id="6VZJ"/>
<dbReference type="PDBsum" id="6W6K"/>
<dbReference type="PDBsum" id="6W77"/>
<dbReference type="PDBsum" id="6W7M"/>
<dbReference type="PDBsum" id="6W7N"/>
<dbReference type="PDBsum" id="6W7W"/>
<dbReference type="PDBsum" id="6WD0"/>
<dbReference type="PDBsum" id="6WD1"/>
<dbReference type="PDBsum" id="6WD2"/>
<dbReference type="PDBsum" id="6WD3"/>
<dbReference type="PDBsum" id="6WD4"/>
<dbReference type="PDBsum" id="6WD5"/>
<dbReference type="PDBsum" id="6WD6"/>
<dbReference type="PDBsum" id="6WD7"/>
<dbReference type="PDBsum" id="6WD8"/>
<dbReference type="PDBsum" id="6WD9"/>
<dbReference type="PDBsum" id="6WDA"/>
<dbReference type="PDBsum" id="6WDB"/>
<dbReference type="PDBsum" id="6WDC"/>
<dbReference type="PDBsum" id="6WDD"/>
<dbReference type="PDBsum" id="6WDE"/>
<dbReference type="PDBsum" id="6WDF"/>
<dbReference type="PDBsum" id="6WDG"/>
<dbReference type="PDBsum" id="6WDH"/>
<dbReference type="PDBsum" id="6WDI"/>
<dbReference type="PDBsum" id="6WDJ"/>
<dbReference type="PDBsum" id="6WDK"/>
<dbReference type="PDBsum" id="6WDL"/>
<dbReference type="PDBsum" id="6WDM"/>
<dbReference type="PDBsum" id="6WNV"/>
<dbReference type="PDBsum" id="6WNW"/>
<dbReference type="PDBsum" id="6X6T"/>
<dbReference type="PDBsum" id="6X7F"/>
<dbReference type="PDBsum" id="6X7K"/>
<dbReference type="PDBsum" id="6X9Q"/>
<dbReference type="PDBsum" id="6XDQ"/>
<dbReference type="PDBsum" id="6XDR"/>
<dbReference type="PDBsum" id="6XE0"/>
<dbReference type="PDBsum" id="6XGF"/>
<dbReference type="PDBsum" id="6XII"/>
<dbReference type="PDBsum" id="6XIJ"/>
<dbReference type="PDBsum" id="6XZA"/>
<dbReference type="PDBsum" id="6XZB"/>
<dbReference type="PDBsum" id="6Y69"/>
<dbReference type="PDBsum" id="6ZTJ"/>
<dbReference type="PDBsum" id="6ZTL"/>
<dbReference type="PDBsum" id="6ZTM"/>
<dbReference type="PDBsum" id="6ZTN"/>
<dbReference type="PDBsum" id="6ZTO"/>
<dbReference type="PDBsum" id="6ZTP"/>
<dbReference type="PDBsum" id="6ZU1"/>
<dbReference type="PDBsum" id="7ABZ"/>
<dbReference type="PDBsum" id="7AC7"/>
<dbReference type="PDBsum" id="7ACJ"/>
<dbReference type="PDBsum" id="7ACR"/>
<dbReference type="PDBsum" id="7AFI"/>
<dbReference type="PDBsum" id="7AFL"/>
<dbReference type="PDBsum" id="7AFO"/>
<dbReference type="PDBsum" id="7B5K"/>
<dbReference type="PDBsum" id="7BOD"/>
<dbReference type="PDBsum" id="7BOE"/>
<dbReference type="PDBsum" id="7BOF"/>
<dbReference type="PDBsum" id="7BOG"/>
<dbReference type="PDBsum" id="7BOH"/>
<dbReference type="PDBsum" id="7BOI"/>
<dbReference type="PDBsum" id="7D6Z"/>
<dbReference type="PDBsum" id="7D80"/>
<dbReference type="PDBsum" id="7JSS"/>
<dbReference type="PDBsum" id="7JSW"/>
<dbReference type="PDBsum" id="7JSZ"/>
<dbReference type="PDBsum" id="7JT1"/>
<dbReference type="PDBsum" id="7JT2"/>
<dbReference type="PDBsum" id="7JT3"/>
<dbReference type="PDBsum" id="7K00"/>
<dbReference type="PDBsum" id="7K50"/>
<dbReference type="PDBsum" id="7K51"/>
<dbReference type="PDBsum" id="7K52"/>
<dbReference type="PDBsum" id="7K53"/>
<dbReference type="PDBsum" id="7K54"/>
<dbReference type="PDBsum" id="7K55"/>
<dbReference type="PDBsum" id="7LV0"/>
<dbReference type="PDBsum" id="7M5D"/>
<dbReference type="PDBsum" id="7N1P"/>
<dbReference type="PDBsum" id="7N2C"/>
<dbReference type="PDBsum" id="7N2U"/>
<dbReference type="PDBsum" id="7N2V"/>
<dbReference type="PDBsum" id="7N30"/>
<dbReference type="PDBsum" id="7N31"/>
<dbReference type="PDBsum" id="7NAR"/>
<dbReference type="PDBsum" id="7NAS"/>
<dbReference type="PDBsum" id="7NAT"/>
<dbReference type="PDBsum" id="7NAU"/>
<dbReference type="PDBsum" id="7NAV"/>
<dbReference type="PDBsum" id="7NAX"/>
<dbReference type="PDBsum" id="7NBU"/>
<dbReference type="PDBsum" id="7O19"/>
<dbReference type="PDBsum" id="7O1A"/>
<dbReference type="PDBsum" id="7O1C"/>
<dbReference type="PDBsum" id="7O5H"/>
<dbReference type="PDBsum" id="7OE0"/>
<dbReference type="PDBsum" id="7OE1"/>
<dbReference type="PDBsum" id="7OI0"/>
<dbReference type="PDBsum" id="7OIZ"/>
<dbReference type="PDBsum" id="7OJ0"/>
<dbReference type="PDBsum" id="7P3K"/>
<dbReference type="PDBsum" id="7PJU"/>
<dbReference type="PDBsum" id="7PJV"/>
<dbReference type="PDBsum" id="7PJY"/>
<dbReference type="PDBsum" id="7QG8"/>
<dbReference type="PDBsum" id="7QGH"/>
<dbReference type="PDBsum" id="7QGN"/>
<dbReference type="PDBsum" id="7QGR"/>
<dbReference type="PDBsum" id="7S1G"/>
<dbReference type="PDBsum" id="7S1H"/>
<dbReference type="PDBsum" id="7S1I"/>
<dbReference type="PDBsum" id="7S1J"/>
<dbReference type="PDBsum" id="7S1K"/>
<dbReference type="PDBsum" id="7SA4"/>
<dbReference type="PDBsum" id="7SS9"/>
<dbReference type="PDBsum" id="7SSD"/>
<dbReference type="PDBsum" id="7SSL"/>
<dbReference type="PDBsum" id="7SSN"/>
<dbReference type="PDBsum" id="7SSO"/>
<dbReference type="PDBsum" id="7SSW"/>
<dbReference type="PDBsum" id="7ST2"/>
<dbReference type="PDBsum" id="7ST6"/>
<dbReference type="PDBsum" id="7ST7"/>
<dbReference type="PDBsum" id="7TOS"/>
<dbReference type="PDBsum" id="7UG7"/>
<dbReference type="PDBsum" id="7UPH"/>
<dbReference type="PDBsum" id="7Y7C"/>
<dbReference type="PDBsum" id="7Y7D"/>
<dbReference type="PDBsum" id="7Y7E"/>
<dbReference type="PDBsum" id="7Y7F"/>
<dbReference type="PDBsum" id="7Y7G"/>
<dbReference type="PDBsum" id="7Y7H"/>
<dbReference type="PDBsum" id="7ZTA"/>
<dbReference type="PDBsum" id="8A3L"/>
<dbReference type="PDBsum" id="8AKN"/>
<dbReference type="PDBsum" id="8AM9"/>
<dbReference type="PDBsum" id="8AYE"/>
<dbReference type="PDBsum" id="8B0X"/>
<dbReference type="PDBsum" id="8B7Y"/>
<dbReference type="PDBsum" id="8BF7"/>
<dbReference type="PDBsum" id="8BGE"/>
<dbReference type="PDBsum" id="8BGH"/>
<dbReference type="PDBsum" id="8BH4"/>
<dbReference type="PDBsum" id="8BHJ"/>
<dbReference type="PDBsum" id="8BHL"/>
<dbReference type="PDBsum" id="8BHN"/>
<dbReference type="PDBsum" id="8BHP"/>
<dbReference type="PDBsum" id="8BIL"/>
<dbReference type="PDBsum" id="8BIM"/>
<dbReference type="PDBsum" id="8CAI"/>
<dbReference type="PDBsum" id="8CEP"/>
<dbReference type="PDBsum" id="8CGJ"/>
<dbReference type="PDBsum" id="8CGR"/>
<dbReference type="PDBsum" id="8CGU"/>
<dbReference type="PDBsum" id="8EIU"/>
<dbReference type="PDBsum" id="8EKC"/>
<dbReference type="PDBsum" id="8EMM"/>
<dbReference type="PDBsum" id="8EYQ"/>
<dbReference type="PDBsum" id="8EYT"/>
<dbReference type="PDBsum" id="8FIZ"/>
<dbReference type="PDBsum" id="8FTO"/>
<dbReference type="PDBsum" id="8FZD"/>
<dbReference type="PDBsum" id="8FZE"/>
<dbReference type="PDBsum" id="8FZF"/>
<dbReference type="PDBsum" id="8FZG"/>
<dbReference type="PDBsum" id="8FZH"/>
<dbReference type="PDBsum" id="8FZI"/>
<dbReference type="PDBsum" id="8FZJ"/>
<dbReference type="PDBsum" id="8G2U"/>
<dbReference type="PDBsum" id="8G31"/>
<dbReference type="PDBsum" id="8G34"/>
<dbReference type="PDBsum" id="8G38"/>
<dbReference type="PDBsum" id="8G6W"/>
<dbReference type="PDBsum" id="8G7P"/>
<dbReference type="PDBsum" id="8G7Q"/>
<dbReference type="PDBsum" id="8G7R"/>
<dbReference type="PDBsum" id="8G7S"/>
<dbReference type="PDBsum" id="8GHU"/>
<dbReference type="PDBsum" id="8HSP"/>
<dbReference type="PDBsum" id="8HTZ"/>
<dbReference type="PDBsum" id="8HU1"/>
<dbReference type="PDBsum" id="8IFB"/>
<dbReference type="PDBsum" id="8IFC"/>
<dbReference type="PDBsum" id="8JSG"/>
<dbReference type="PDBsum" id="8JSH"/>
<dbReference type="PDBsum" id="8K3O"/>
<dbReference type="PDBsum" id="8K4E"/>
<dbReference type="PDBsum" id="8P16"/>
<dbReference type="PDBsum" id="8P17"/>
<dbReference type="PDBsum" id="8P18"/>
<dbReference type="PDBsum" id="8PEG"/>
<dbReference type="PDBsum" id="8PHJ"/>
<dbReference type="PDBsum" id="8PKL"/>
<dbReference type="PDBsum" id="8PVA"/>
<dbReference type="PDBsum" id="8Q4F"/>
<dbReference type="PDBsum" id="8QBT"/>
<dbReference type="PDBsum" id="8QK7"/>
<dbReference type="PDBsum" id="8QOA"/>
<dbReference type="PDBsum" id="8R3V"/>
<dbReference type="PDBsum" id="8R6C"/>
<dbReference type="PDBsum" id="8R8M"/>
<dbReference type="PDBsum" id="8RCL"/>
<dbReference type="PDBsum" id="8RCM"/>
<dbReference type="PDBsum" id="8RCS"/>
<dbReference type="PDBsum" id="8RCT"/>
<dbReference type="PDBsum" id="8SYL"/>
<dbReference type="PDBsum" id="8T5D"/>
<dbReference type="PDBsum" id="8T5H"/>
<dbReference type="PDBsum" id="8UPO"/>
<dbReference type="PDBsum" id="8UPR"/>
<dbReference type="PDBsum" id="8UQL"/>
<dbReference type="PDBsum" id="8UQM"/>
<dbReference type="PDBsum" id="8UQP"/>
<dbReference type="PDBsum" id="8UR0"/>
<dbReference type="PDBsum" id="8URH"/>
<dbReference type="PDBsum" id="8URI"/>
<dbReference type="PDBsum" id="8URX"/>
<dbReference type="PDBsum" id="8URY"/>
<dbReference type="PDBsum" id="8VS9"/>
<dbReference type="PDBsum" id="8VSA"/>
<dbReference type="PDBsum" id="8YUO"/>
<dbReference type="PDBsum" id="8YUP"/>
<dbReference type="PDBsum" id="8YUQ"/>
<dbReference type="PDBsum" id="8YUR"/>
<dbReference type="PDBsum" id="8YUS"/>
<dbReference type="PDBsum" id="9DUK"/>
<dbReference type="PDBsum" id="9DUL"/>
<dbReference type="PDBsum" id="9FBV"/>
<dbReference type="PDBsum" id="9GFT"/>
<dbReference type="PDBsum" id="9GGR"/>
<dbReference type="PDBsum" id="9GUP"/>
<dbReference type="PDBsum" id="9GUQ"/>
<dbReference type="PDBsum" id="9GUS"/>
<dbReference type="PDBsum" id="9GUT"/>
<dbReference type="PDBsum" id="9GUU"/>
<dbReference type="PDBsum" id="9GUV"/>
<dbReference type="PDBsum" id="9GUW"/>
<dbReference type="PDBsum" id="9GUX"/>
<dbReference type="PDBsum" id="9MOR"/>
<dbReference type="PDBsum" id="9MQ4"/>
<dbReference type="EMDB" id="EMD-0076"/>
<dbReference type="EMDB" id="EMD-0080"/>
<dbReference type="EMDB" id="EMD-0081"/>
<dbReference type="EMDB" id="EMD-0082"/>
<dbReference type="EMDB" id="EMD-0083"/>
<dbReference type="EMDB" id="EMD-0137"/>
<dbReference type="EMDB" id="EMD-0139"/>
<dbReference type="EMDB" id="EMD-0261"/>
<dbReference type="EMDB" id="EMD-10353"/>
<dbReference type="EMDB" id="EMD-10453"/>
<dbReference type="EMDB" id="EMD-10458"/>
<dbReference type="EMDB" id="EMD-10656"/>
<dbReference type="EMDB" id="EMD-10657"/>
<dbReference type="EMDB" id="EMD-10705"/>
<dbReference type="EMDB" id="EMD-11419"/>
<dbReference type="EMDB" id="EMD-11710"/>
<dbReference type="EMDB" id="EMD-11713"/>
<dbReference type="EMDB" id="EMD-11717"/>
<dbReference type="EMDB" id="EMD-11718"/>
<dbReference type="EMDB" id="EMD-12035"/>
<dbReference type="EMDB" id="EMD-12239"/>
<dbReference type="EMDB" id="EMD-12240"/>
<dbReference type="EMDB" id="EMD-12241"/>
<dbReference type="EMDB" id="EMD-12242"/>
<dbReference type="EMDB" id="EMD-12243"/>
<dbReference type="EMDB" id="EMD-12244"/>
<dbReference type="EMDB" id="EMD-12245"/>
<dbReference type="EMDB" id="EMD-12246"/>
<dbReference type="EMDB" id="EMD-12247"/>
<dbReference type="EMDB" id="EMD-12248"/>
<dbReference type="EMDB" id="EMD-12249"/>
<dbReference type="EMDB" id="EMD-12261"/>
<dbReference type="EMDB" id="EMD-12693"/>
<dbReference type="EMDB" id="EMD-12694"/>
<dbReference type="EMDB" id="EMD-12695"/>
<dbReference type="EMDB" id="EMD-12936"/>
<dbReference type="EMDB" id="EMD-12937"/>
<dbReference type="EMDB" id="EMD-13180"/>
<dbReference type="EMDB" id="EMD-13461"/>
<dbReference type="EMDB" id="EMD-13464"/>
<dbReference type="EMDB" id="EMD-13952"/>
<dbReference type="EMDB" id="EMD-13955"/>
<dbReference type="EMDB" id="EMD-13958"/>
<dbReference type="EMDB" id="EMD-14956"/>
<dbReference type="EMDB" id="EMD-15116"/>
<dbReference type="EMDB" id="EMD-15488"/>
<dbReference type="EMDB" id="EMD-15523"/>
<dbReference type="EMDB" id="EMD-15712"/>
<dbReference type="EMDB" id="EMD-15793"/>
<dbReference type="EMDB" id="EMD-15905"/>
<dbReference type="EMDB" id="EMD-16015"/>
<dbReference type="EMDB" id="EMD-16029"/>
<dbReference type="EMDB" id="EMD-16031"/>
<dbReference type="EMDB" id="EMD-16047"/>
<dbReference type="EMDB" id="EMD-16057"/>
<dbReference type="EMDB" id="EMD-16059"/>
<dbReference type="EMDB" id="EMD-16062"/>
<dbReference type="EMDB" id="EMD-16065"/>
<dbReference type="EMDB" id="EMD-16081"/>
<dbReference type="EMDB" id="EMD-16082"/>
<dbReference type="EMDB" id="EMD-16526"/>
<dbReference type="EMDB" id="EMD-16612"/>
<dbReference type="EMDB" id="EMD-16645"/>
<dbReference type="EMDB" id="EMD-16650"/>
<dbReference type="EMDB" id="EMD-16651"/>
<dbReference type="EMDB" id="EMD-17346"/>
<dbReference type="EMDB" id="EMD-17347"/>
<dbReference type="EMDB" id="EMD-17348"/>
<dbReference type="EMDB" id="EMD-17631"/>
<dbReference type="EMDB" id="EMD-17667"/>
<dbReference type="EMDB" id="EMD-17743"/>
<dbReference type="EMDB" id="EMD-17959"/>
<dbReference type="EMDB" id="EMD-18145"/>
<dbReference type="EMDB" id="EMD-18320"/>
<dbReference type="EMDB" id="EMD-18458"/>
<dbReference type="EMDB" id="EMD-18534"/>
<dbReference type="EMDB" id="EMD-18875"/>
<dbReference type="EMDB" id="EMD-18950"/>
<dbReference type="EMDB" id="EMD-19004"/>
<dbReference type="EMDB" id="EMD-19054"/>
<dbReference type="EMDB" id="EMD-19055"/>
<dbReference type="EMDB" id="EMD-19058"/>
<dbReference type="EMDB" id="EMD-19059"/>
<dbReference type="EMDB" id="EMD-20048"/>
<dbReference type="EMDB" id="EMD-20052"/>
<dbReference type="EMDB" id="EMD-21558"/>
<dbReference type="EMDB" id="EMD-21569"/>
<dbReference type="EMDB" id="EMD-21571"/>
<dbReference type="EMDB" id="EMD-21572"/>
<dbReference type="EMDB" id="EMD-21573"/>
<dbReference type="EMDB" id="EMD-21625"/>
<dbReference type="EMDB" id="EMD-21630"/>
<dbReference type="EMDB" id="EMD-21631"/>
<dbReference type="EMDB" id="EMD-21632"/>
<dbReference type="EMDB" id="EMD-21633"/>
<dbReference type="EMDB" id="EMD-21634"/>
<dbReference type="EMDB" id="EMD-21635"/>
<dbReference type="EMDB" id="EMD-21636"/>
<dbReference type="EMDB" id="EMD-21637"/>
<dbReference type="EMDB" id="EMD-21638"/>
<dbReference type="EMDB" id="EMD-21639"/>
<dbReference type="EMDB" id="EMD-21640"/>
<dbReference type="EMDB" id="EMD-21641"/>
<dbReference type="EMDB" id="EMD-21857"/>
<dbReference type="EMDB" id="EMD-21858"/>
<dbReference type="EMDB" id="EMD-22143"/>
<dbReference type="EMDB" id="EMD-22459"/>
<dbReference type="EMDB" id="EMD-22461"/>
<dbReference type="EMDB" id="EMD-22464"/>
<dbReference type="EMDB" id="EMD-22466"/>
<dbReference type="EMDB" id="EMD-22469"/>
<dbReference type="EMDB" id="EMD-22472"/>
<dbReference type="EMDB" id="EMD-22669"/>
<dbReference type="EMDB" id="EMD-22670"/>
<dbReference type="EMDB" id="EMD-22671"/>
<dbReference type="EMDB" id="EMD-22672"/>
<dbReference type="EMDB" id="EMD-22673"/>
<dbReference type="EMDB" id="EMD-22674"/>
<dbReference type="EMDB" id="EMD-23528"/>
<dbReference type="EMDB" id="EMD-24120"/>
<dbReference type="EMDB" id="EMD-24132"/>
<dbReference type="EMDB" id="EMD-24133"/>
<dbReference type="EMDB" id="EMD-24134"/>
<dbReference type="EMDB" id="EMD-24135"/>
<dbReference type="EMDB" id="EMD-24136"/>
<dbReference type="EMDB" id="EMD-24803"/>
<dbReference type="EMDB" id="EMD-25405"/>
<dbReference type="EMDB" id="EMD-25407"/>
<dbReference type="EMDB" id="EMD-25409"/>
<dbReference type="EMDB" id="EMD-25410"/>
<dbReference type="EMDB" id="EMD-25411"/>
<dbReference type="EMDB" id="EMD-25415"/>
<dbReference type="EMDB" id="EMD-25418"/>
<dbReference type="EMDB" id="EMD-25420"/>
<dbReference type="EMDB" id="EMD-25421"/>
<dbReference type="EMDB" id="EMD-30598"/>
<dbReference type="EMDB" id="EMD-30611"/>
<dbReference type="EMDB" id="EMD-33660"/>
<dbReference type="EMDB" id="EMD-33661"/>
<dbReference type="EMDB" id="EMD-33662"/>
<dbReference type="EMDB" id="EMD-33663"/>
<dbReference type="EMDB" id="EMD-33664"/>
<dbReference type="EMDB" id="EMD-33665"/>
<dbReference type="EMDB" id="EMD-3489"/>
<dbReference type="EMDB" id="EMD-3490"/>
<dbReference type="EMDB" id="EMD-3492"/>
<dbReference type="EMDB" id="EMD-3493"/>
<dbReference type="EMDB" id="EMD-3494"/>
<dbReference type="EMDB" id="EMD-3495"/>
<dbReference type="EMDB" id="EMD-35001"/>
<dbReference type="EMDB" id="EMD-35020"/>
<dbReference type="EMDB" id="EMD-35022"/>
<dbReference type="EMDB" id="EMD-3508"/>
<dbReference type="EMDB" id="EMD-35411"/>
<dbReference type="EMDB" id="EMD-35412"/>
<dbReference type="EMDB" id="EMD-3580"/>
<dbReference type="EMDB" id="EMD-3661"/>
<dbReference type="EMDB" id="EMD-36619"/>
<dbReference type="EMDB" id="EMD-3662"/>
<dbReference type="EMDB" id="EMD-36620"/>
<dbReference type="EMDB" id="EMD-3663"/>
<dbReference type="EMDB" id="EMD-36854"/>
<dbReference type="EMDB" id="EMD-36883"/>
<dbReference type="EMDB" id="EMD-3713"/>
<dbReference type="EMDB" id="EMD-3730"/>
<dbReference type="EMDB" id="EMD-3898"/>
<dbReference type="EMDB" id="EMD-3899"/>
<dbReference type="EMDB" id="EMD-3903"/>
<dbReference type="EMDB" id="EMD-39577"/>
<dbReference type="EMDB" id="EMD-39578"/>
<dbReference type="EMDB" id="EMD-39579"/>
<dbReference type="EMDB" id="EMD-39580"/>
<dbReference type="EMDB" id="EMD-39581"/>
<dbReference type="EMDB" id="EMD-4001"/>
<dbReference type="EMDB" id="EMD-4121"/>
<dbReference type="EMDB" id="EMD-4122"/>
<dbReference type="EMDB" id="EMD-4123"/>
<dbReference type="EMDB" id="EMD-4124"/>
<dbReference type="EMDB" id="EMD-4125"/>
<dbReference type="EMDB" id="EMD-4126"/>
<dbReference type="EMDB" id="EMD-4476"/>
<dbReference type="EMDB" id="EMD-4477"/>
<dbReference type="EMDB" id="EMD-4478"/>
<dbReference type="EMDB" id="EMD-50296"/>
<dbReference type="EMDB" id="EMD-51318"/>
<dbReference type="EMDB" id="EMD-51340"/>
<dbReference type="EMDB" id="EMD-51615"/>
<dbReference type="EMDB" id="EMD-51616"/>
<dbReference type="EMDB" id="EMD-51618"/>
<dbReference type="EMDB" id="EMD-51619"/>
<dbReference type="EMDB" id="EMD-51620"/>
<dbReference type="EMDB" id="EMD-51621"/>
<dbReference type="EMDB" id="EMD-51622"/>
<dbReference type="EMDB" id="EMD-51623"/>
<dbReference type="EMDB" id="EMD-6667"/>
<dbReference type="EMDB" id="EMD-7289"/>
<dbReference type="EMDB" id="EMD-7341"/>
<dbReference type="EMDB" id="EMD-8107"/>
<dbReference type="EMDB" id="EMD-8175"/>
<dbReference type="EMDB" id="EMD-8176"/>
<dbReference type="EMDB" id="EMD-8237"/>
<dbReference type="EMDB" id="EMD-8238"/>
<dbReference type="EMDB" id="EMD-8279"/>
<dbReference type="EMDB" id="EMD-8280"/>
<dbReference type="EMDB" id="EMD-8281"/>
<dbReference type="EMDB" id="EMD-8282"/>
<dbReference type="EMDB" id="EMD-8505"/>
<dbReference type="EMDB" id="EMD-8615"/>
<dbReference type="EMDB" id="EMD-8616"/>
<dbReference type="EMDB" id="EMD-8617"/>
<dbReference type="EMDB" id="EMD-8618"/>
<dbReference type="EMDB" id="EMD-8619"/>
<dbReference type="EMDB" id="EMD-8620"/>
<dbReference type="EMDB" id="EMD-8813"/>
<dbReference type="EMDB" id="EMD-8814"/>
<dbReference type="EMDB" id="EMD-8815"/>
<dbReference type="EMDB" id="EMD-8828"/>
<dbReference type="SMR" id="P0A7U7"/>
<dbReference type="BioGRID" id="4260844">
    <property type="interactions" value="83"/>
</dbReference>
<dbReference type="ComplexPortal" id="CPX-3802">
    <property type="entry name" value="30S small ribosomal subunit"/>
</dbReference>
<dbReference type="DIP" id="DIP-35857N"/>
<dbReference type="FunCoup" id="P0A7U7">
    <property type="interactions" value="860"/>
</dbReference>
<dbReference type="IntAct" id="P0A7U7">
    <property type="interactions" value="85"/>
</dbReference>
<dbReference type="STRING" id="511145.b0023"/>
<dbReference type="jPOST" id="P0A7U7"/>
<dbReference type="PaxDb" id="511145-b0023"/>
<dbReference type="EnsemblBacteria" id="AAC73134">
    <property type="protein sequence ID" value="AAC73134"/>
    <property type="gene ID" value="b0023"/>
</dbReference>
<dbReference type="GeneID" id="93777413"/>
<dbReference type="GeneID" id="944759"/>
<dbReference type="KEGG" id="ecj:JW0022"/>
<dbReference type="KEGG" id="eco:b0023"/>
<dbReference type="KEGG" id="ecoc:C3026_00110"/>
<dbReference type="PATRIC" id="fig|1411691.4.peg.2261"/>
<dbReference type="EchoBASE" id="EB0912"/>
<dbReference type="eggNOG" id="COG0268">
    <property type="taxonomic scope" value="Bacteria"/>
</dbReference>
<dbReference type="HOGENOM" id="CLU_160655_4_0_6"/>
<dbReference type="InParanoid" id="P0A7U7"/>
<dbReference type="OMA" id="GVIHKNA"/>
<dbReference type="OrthoDB" id="9807974at2"/>
<dbReference type="PhylomeDB" id="P0A7U7"/>
<dbReference type="BioCyc" id="EcoCyc:EG10919-MONOMER"/>
<dbReference type="BioCyc" id="MetaCyc:EG10919-MONOMER"/>
<dbReference type="EvolutionaryTrace" id="P0A7U7"/>
<dbReference type="PRO" id="PR:P0A7U7"/>
<dbReference type="Proteomes" id="UP000000625">
    <property type="component" value="Chromosome"/>
</dbReference>
<dbReference type="GO" id="GO:0005737">
    <property type="term" value="C:cytoplasm"/>
    <property type="evidence" value="ECO:0000314"/>
    <property type="project" value="ComplexPortal"/>
</dbReference>
<dbReference type="GO" id="GO:0005829">
    <property type="term" value="C:cytosol"/>
    <property type="evidence" value="ECO:0000314"/>
    <property type="project" value="EcoCyc"/>
</dbReference>
<dbReference type="GO" id="GO:0022627">
    <property type="term" value="C:cytosolic small ribosomal subunit"/>
    <property type="evidence" value="ECO:0000314"/>
    <property type="project" value="CAFA"/>
</dbReference>
<dbReference type="GO" id="GO:0015935">
    <property type="term" value="C:small ribosomal subunit"/>
    <property type="evidence" value="ECO:0000318"/>
    <property type="project" value="GO_Central"/>
</dbReference>
<dbReference type="GO" id="GO:0008073">
    <property type="term" value="F:ornithine decarboxylase inhibitor activity"/>
    <property type="evidence" value="ECO:0000314"/>
    <property type="project" value="EcoCyc"/>
</dbReference>
<dbReference type="GO" id="GO:0070181">
    <property type="term" value="F:small ribosomal subunit rRNA binding"/>
    <property type="evidence" value="ECO:0000314"/>
    <property type="project" value="EcoCyc"/>
</dbReference>
<dbReference type="GO" id="GO:0003735">
    <property type="term" value="F:structural constituent of ribosome"/>
    <property type="evidence" value="ECO:0000314"/>
    <property type="project" value="CAFA"/>
</dbReference>
<dbReference type="GO" id="GO:0002181">
    <property type="term" value="P:cytoplasmic translation"/>
    <property type="evidence" value="ECO:0000303"/>
    <property type="project" value="ComplexPortal"/>
</dbReference>
<dbReference type="GO" id="GO:0000028">
    <property type="term" value="P:ribosomal small subunit assembly"/>
    <property type="evidence" value="ECO:0000314"/>
    <property type="project" value="CAFA"/>
</dbReference>
<dbReference type="FunFam" id="1.20.58.110:FF:000001">
    <property type="entry name" value="30S ribosomal protein S20"/>
    <property type="match status" value="1"/>
</dbReference>
<dbReference type="Gene3D" id="1.20.58.110">
    <property type="entry name" value="Ribosomal protein S20"/>
    <property type="match status" value="1"/>
</dbReference>
<dbReference type="HAMAP" id="MF_00500">
    <property type="entry name" value="Ribosomal_bS20"/>
    <property type="match status" value="1"/>
</dbReference>
<dbReference type="InterPro" id="IPR002583">
    <property type="entry name" value="Ribosomal_bS20"/>
</dbReference>
<dbReference type="InterPro" id="IPR036510">
    <property type="entry name" value="Ribosomal_bS20_sf"/>
</dbReference>
<dbReference type="NCBIfam" id="TIGR00029">
    <property type="entry name" value="S20"/>
    <property type="match status" value="1"/>
</dbReference>
<dbReference type="PANTHER" id="PTHR33398">
    <property type="entry name" value="30S RIBOSOMAL PROTEIN S20"/>
    <property type="match status" value="1"/>
</dbReference>
<dbReference type="PANTHER" id="PTHR33398:SF1">
    <property type="entry name" value="SMALL RIBOSOMAL SUBUNIT PROTEIN BS20C"/>
    <property type="match status" value="1"/>
</dbReference>
<dbReference type="Pfam" id="PF01649">
    <property type="entry name" value="Ribosomal_S20p"/>
    <property type="match status" value="1"/>
</dbReference>
<dbReference type="SUPFAM" id="SSF46992">
    <property type="entry name" value="Ribosomal protein S20"/>
    <property type="match status" value="1"/>
</dbReference>
<evidence type="ECO:0000256" key="1">
    <source>
        <dbReference type="SAM" id="MobiDB-lite"/>
    </source>
</evidence>
<evidence type="ECO:0000269" key="2">
    <source>
    </source>
</evidence>
<evidence type="ECO:0000269" key="3">
    <source>
    </source>
</evidence>
<evidence type="ECO:0000269" key="4">
    <source>
    </source>
</evidence>
<evidence type="ECO:0000269" key="5">
    <source>
    </source>
</evidence>
<evidence type="ECO:0000269" key="6">
    <source>
    </source>
</evidence>
<evidence type="ECO:0000269" key="7">
    <source>
    </source>
</evidence>
<evidence type="ECO:0000269" key="8">
    <source>
    </source>
</evidence>
<evidence type="ECO:0000269" key="9">
    <source>
    </source>
</evidence>
<evidence type="ECO:0000303" key="10">
    <source>
    </source>
</evidence>
<evidence type="ECO:0000305" key="11"/>
<evidence type="ECO:0007829" key="12">
    <source>
        <dbReference type="PDB" id="7OE1"/>
    </source>
</evidence>
<evidence type="ECO:0007829" key="13">
    <source>
        <dbReference type="PDB" id="8CGJ"/>
    </source>
</evidence>
<comment type="function">
    <text>Binds directly to 16S ribosomal RNA.</text>
</comment>
<comment type="subunit">
    <text evidence="2 3 4 5 6 7 8 9">Part of the 30S ribosomal subunit (PubMed:10094780, PubMed:12244297, PubMed:12809609, PubMed:16272117, PubMed:27906160, PubMed:27906161, PubMed:27934701, PubMed:786731).</text>
</comment>
<comment type="mass spectrometry" mass="9553.6" method="MALDI" evidence="2"/>
<comment type="similarity">
    <text evidence="11">Belongs to the bacterial ribosomal protein bS20 family.</text>
</comment>
<reference key="1">
    <citation type="journal article" date="1981" name="J. Biol. Chem.">
        <title>Nucleotide sequence of the gene for ribosomal protein S20 and its flanking regions.</title>
        <authorList>
            <person name="Mackie G.A."/>
        </authorList>
    </citation>
    <scope>NUCLEOTIDE SEQUENCE [GENOMIC DNA]</scope>
    <source>
        <strain>K12</strain>
    </source>
</reference>
<reference key="2">
    <citation type="journal article" date="1985" name="J. Biol. Chem.">
        <title>Characterization of the ileS-lsp operon in Escherichia coli. Identification of an open reading frame upstream of the ileS gene and potential promoter(s) for the ileS-lsp operon.</title>
        <authorList>
            <person name="Kamio Y."/>
            <person name="Lin C.-K."/>
            <person name="Regue M."/>
            <person name="Wu H.C."/>
        </authorList>
    </citation>
    <scope>NUCLEOTIDE SEQUENCE [GENOMIC DNA]</scope>
</reference>
<reference key="3">
    <citation type="journal article" date="1986" name="Nucleic Acids Res.">
        <title>Structure of the DNA distal to the gene for ribosomal protein S20 in Escherichia coli K12: presence of a strong terminator and an IS1 element.</title>
        <authorList>
            <person name="Mackie G.A."/>
        </authorList>
    </citation>
    <scope>NUCLEOTIDE SEQUENCE [GENOMIC DNA]</scope>
</reference>
<reference key="4">
    <citation type="journal article" date="1992" name="Nucleic Acids Res.">
        <title>Systematic sequencing of the Escherichia coli genome: analysis of the 0-2.4 min region.</title>
        <authorList>
            <person name="Yura T."/>
            <person name="Mori H."/>
            <person name="Nagai H."/>
            <person name="Nagata T."/>
            <person name="Ishihama A."/>
            <person name="Fujita N."/>
            <person name="Isono K."/>
            <person name="Mizobuchi K."/>
            <person name="Nakata A."/>
        </authorList>
    </citation>
    <scope>NUCLEOTIDE SEQUENCE [LARGE SCALE GENOMIC DNA]</scope>
    <source>
        <strain>K12</strain>
    </source>
</reference>
<reference key="5">
    <citation type="journal article" date="1997" name="Science">
        <title>The complete genome sequence of Escherichia coli K-12.</title>
        <authorList>
            <person name="Blattner F.R."/>
            <person name="Plunkett G. III"/>
            <person name="Bloch C.A."/>
            <person name="Perna N.T."/>
            <person name="Burland V."/>
            <person name="Riley M."/>
            <person name="Collado-Vides J."/>
            <person name="Glasner J.D."/>
            <person name="Rode C.K."/>
            <person name="Mayhew G.F."/>
            <person name="Gregor J."/>
            <person name="Davis N.W."/>
            <person name="Kirkpatrick H.A."/>
            <person name="Goeden M.A."/>
            <person name="Rose D.J."/>
            <person name="Mau B."/>
            <person name="Shao Y."/>
        </authorList>
    </citation>
    <scope>NUCLEOTIDE SEQUENCE [LARGE SCALE GENOMIC DNA]</scope>
    <source>
        <strain>K12 / MG1655 / ATCC 47076</strain>
    </source>
</reference>
<reference key="6">
    <citation type="journal article" date="2006" name="Mol. Syst. Biol.">
        <title>Highly accurate genome sequences of Escherichia coli K-12 strains MG1655 and W3110.</title>
        <authorList>
            <person name="Hayashi K."/>
            <person name="Morooka N."/>
            <person name="Yamamoto Y."/>
            <person name="Fujita K."/>
            <person name="Isono K."/>
            <person name="Choi S."/>
            <person name="Ohtsubo E."/>
            <person name="Baba T."/>
            <person name="Wanner B.L."/>
            <person name="Mori H."/>
            <person name="Horiuchi T."/>
        </authorList>
    </citation>
    <scope>NUCLEOTIDE SEQUENCE [LARGE SCALE GENOMIC DNA]</scope>
    <source>
        <strain>K12 / W3110 / ATCC 27325 / DSM 5911</strain>
    </source>
</reference>
<reference key="7">
    <citation type="journal article" date="1976" name="FEBS Lett.">
        <title>Primary structure of protein S20 from the small ribosomal subunit of Escherichia coli.</title>
        <authorList>
            <person name="Wittmann-Liebold B."/>
            <person name="Marzinzig E."/>
            <person name="Lehmann A."/>
        </authorList>
    </citation>
    <scope>PROTEIN SEQUENCE OF 2-87</scope>
    <scope>SUBUNIT</scope>
    <source>
        <strain>K</strain>
    </source>
</reference>
<reference key="8">
    <citation type="journal article" date="1997" name="Electrophoresis">
        <title>Escherichia coli proteome analysis using the gene-protein database.</title>
        <authorList>
            <person name="VanBogelen R.A."/>
            <person name="Abshire K.Z."/>
            <person name="Moldover B."/>
            <person name="Olson E.R."/>
            <person name="Neidhardt F.C."/>
        </authorList>
    </citation>
    <scope>IDENTIFICATION BY 2D-GEL</scope>
</reference>
<reference key="9">
    <citation type="journal article" date="1999" name="Anal. Biochem.">
        <title>Observation of Escherichia coli ribosomal proteins and their posttranslational modifications by mass spectrometry.</title>
        <authorList>
            <person name="Arnold R.J."/>
            <person name="Reilly J.P."/>
        </authorList>
    </citation>
    <scope>MASS SPECTROMETRY</scope>
    <scope>SUBUNIT</scope>
    <source>
        <strain>K12 / ATCC 25404 / DSM 5698 / NCIMB 11290</strain>
    </source>
</reference>
<reference key="10">
    <citation type="journal article" date="2014" name="Curr. Opin. Struct. Biol.">
        <title>A new system for naming ribosomal proteins.</title>
        <authorList>
            <person name="Ban N."/>
            <person name="Beckmann R."/>
            <person name="Cate J.H.D."/>
            <person name="Dinman J.D."/>
            <person name="Dragon F."/>
            <person name="Ellis S.R."/>
            <person name="Lafontaine D.L.J."/>
            <person name="Lindahl L."/>
            <person name="Liljas A."/>
            <person name="Lipton J.M."/>
            <person name="McAlear M.A."/>
            <person name="Moore P.B."/>
            <person name="Noller H.F."/>
            <person name="Ortega J."/>
            <person name="Panse V.G."/>
            <person name="Ramakrishnan V."/>
            <person name="Spahn C.M.T."/>
            <person name="Steitz T.A."/>
            <person name="Tchorzewski M."/>
            <person name="Tollervey D."/>
            <person name="Warren A.J."/>
            <person name="Williamson J.R."/>
            <person name="Wilson D."/>
            <person name="Yonath A."/>
            <person name="Yusupov M."/>
        </authorList>
    </citation>
    <scope>NOMENCLATURE</scope>
</reference>
<reference key="11">
    <citation type="journal article" date="2002" name="Nat. Struct. Biol.">
        <title>All-atom homology model of the Escherichia coli 30S ribosomal subunit.</title>
        <authorList>
            <person name="Tung C.-S."/>
            <person name="Joseph S."/>
            <person name="Sanbonmatsu K.Y."/>
        </authorList>
    </citation>
    <scope>3D-STRUCTURE MODELING</scope>
    <scope>SUBUNIT</scope>
</reference>
<reference key="12">
    <citation type="journal article" date="2003" name="Cell">
        <title>Study of the structural dynamics of the E. coli 70S ribosome using real-space refinement.</title>
        <authorList>
            <person name="Gao H."/>
            <person name="Sengupta J."/>
            <person name="Valle M."/>
            <person name="Korostelev A."/>
            <person name="Eswar N."/>
            <person name="Stagg S.M."/>
            <person name="Van Roey P."/>
            <person name="Agrawal R.K."/>
            <person name="Harvey S.C."/>
            <person name="Sali A."/>
            <person name="Chapman M.S."/>
            <person name="Frank J."/>
        </authorList>
    </citation>
    <scope>STRUCTURE BY ELECTRON MICROSCOPY (11.50 ANGSTROMS)</scope>
    <scope>SUBUNIT</scope>
    <source>
        <strain>MRE-600</strain>
    </source>
</reference>
<reference key="13">
    <citation type="journal article" date="2005" name="Science">
        <title>Structures of the bacterial ribosome at 3.5 A resolution.</title>
        <authorList>
            <person name="Schuwirth B.S."/>
            <person name="Borovinskaya M.A."/>
            <person name="Hau C.W."/>
            <person name="Zhang W."/>
            <person name="Vila-Sanjurjo A."/>
            <person name="Holton J.M."/>
            <person name="Cate J.H.D."/>
        </authorList>
    </citation>
    <scope>X-RAY CRYSTALLOGRAPHY (3.46 ANGSTROMS) OF 2 DIFFERENT RIBOSOME STRUCTURES</scope>
    <scope>SUBUNIT</scope>
    <source>
        <strain>MRE-600</strain>
    </source>
</reference>
<reference key="14">
    <citation type="journal article" date="2017" name="Nature">
        <title>Mechanistic insights into the alternative translation termination by ArfA and RF2.</title>
        <authorList>
            <person name="Ma C."/>
            <person name="Kurita D."/>
            <person name="Li N."/>
            <person name="Chen Y."/>
            <person name="Himeno H."/>
            <person name="Gao N."/>
        </authorList>
    </citation>
    <scope>STRUCTURE BY ELECTRON MICROSCOPY (3.0 ANGSTROMS) OF 70S RIBOSOME IN COMPLEX WITH ARFA AND RF2</scope>
    <scope>SUBUNIT</scope>
</reference>
<reference key="15">
    <citation type="journal article" date="2017" name="Nature">
        <title>Structural basis for ArfA-RF2-mediated translation termination on mRNAs lacking stop codons.</title>
        <authorList>
            <person name="Huter P."/>
            <person name="Mueller C."/>
            <person name="Beckert B."/>
            <person name="Arenz S."/>
            <person name="Berninghausen O."/>
            <person name="Beckmann R."/>
            <person name="Wilson D.N."/>
        </authorList>
    </citation>
    <scope>STRUCTURE BY ELECTRON MICROSCOPY (3.1 ANGSTROMS) OF 70S RIBOSOME IN COMPLEX WITH ARFA AND RF2</scope>
    <scope>SUBUNIT</scope>
</reference>
<reference key="16">
    <citation type="journal article" date="2016" name="Science">
        <title>Translational termination without a stop codon.</title>
        <authorList>
            <person name="James N.R."/>
            <person name="Brown A."/>
            <person name="Gordiyenko Y."/>
            <person name="Ramakrishnan V."/>
        </authorList>
    </citation>
    <scope>STRUCTURE BY ELECTRON MICROSCOPY (2.97 ANGSTROMS) OF 70S RIBOSOME IN COMPLEX WITH ARFA AND RF2</scope>
    <scope>SUBUNIT</scope>
</reference>
<reference key="17">
    <citation type="journal article" date="2017" name="Nature">
        <title>Structural basis of co-translational quality control by ArfA and RF2 bound to ribosome.</title>
        <authorList>
            <person name="Zeng F."/>
            <person name="Chen Y."/>
            <person name="Remis J."/>
            <person name="Shekhar M."/>
            <person name="Phillips J.C."/>
            <person name="Tajkhorshid E."/>
            <person name="Jin H."/>
        </authorList>
    </citation>
    <scope>STRUCTURE BY ELECTRON MICROSCOPY (3.52 ANGSTROMS) OF 70S RIBOSOME IN COMPLEX WITH ARFA AND RF2</scope>
    <scope>SUBUNIT</scope>
</reference>
<keyword id="KW-0002">3D-structure</keyword>
<keyword id="KW-0903">Direct protein sequencing</keyword>
<keyword id="KW-1185">Reference proteome</keyword>
<keyword id="KW-0687">Ribonucleoprotein</keyword>
<keyword id="KW-0689">Ribosomal protein</keyword>
<keyword id="KW-0694">RNA-binding</keyword>
<keyword id="KW-0699">rRNA-binding</keyword>
<gene>
    <name type="primary">rpsT</name>
    <name type="ordered locus">b0023</name>
    <name type="ordered locus">JW0022</name>
</gene>
<sequence length="87" mass="9684">MANIKSAKKRAIQSEKARKHNASRRSMMRTFIKKVYAAIEAGDKAAAQKAFNEMQPIVDRQAAKGLIHKNKAARHKANLTAQINKLA</sequence>
<name>RS20_ECOLI</name>
<organism>
    <name type="scientific">Escherichia coli (strain K12)</name>
    <dbReference type="NCBI Taxonomy" id="83333"/>
    <lineage>
        <taxon>Bacteria</taxon>
        <taxon>Pseudomonadati</taxon>
        <taxon>Pseudomonadota</taxon>
        <taxon>Gammaproteobacteria</taxon>
        <taxon>Enterobacterales</taxon>
        <taxon>Enterobacteriaceae</taxon>
        <taxon>Escherichia</taxon>
    </lineage>
</organism>
<feature type="initiator methionine" description="Removed" evidence="9">
    <location>
        <position position="1"/>
    </location>
</feature>
<feature type="chain" id="PRO_0000167958" description="Small ribosomal subunit protein bS20">
    <location>
        <begin position="2"/>
        <end position="87"/>
    </location>
</feature>
<feature type="region of interest" description="Disordered" evidence="1">
    <location>
        <begin position="1"/>
        <end position="26"/>
    </location>
</feature>
<feature type="sequence conflict" description="In Ref. 2; AAA24604." evidence="11" ref="2">
    <original>A</original>
    <variation>R</variation>
    <location>
        <position position="38"/>
    </location>
</feature>
<feature type="helix" evidence="13">
    <location>
        <begin position="5"/>
        <end position="41"/>
    </location>
</feature>
<feature type="helix" evidence="13">
    <location>
        <begin position="44"/>
        <end position="63"/>
    </location>
</feature>
<feature type="strand" evidence="12">
    <location>
        <begin position="65"/>
        <end position="67"/>
    </location>
</feature>
<feature type="helix" evidence="13">
    <location>
        <begin position="69"/>
        <end position="84"/>
    </location>
</feature>
<protein>
    <recommendedName>
        <fullName evidence="10">Small ribosomal subunit protein bS20</fullName>
    </recommendedName>
    <alternativeName>
        <fullName>30S ribosomal protein S20</fullName>
    </alternativeName>
</protein>